<comment type="function">
    <molecule>Mature core protein</molecule>
    <text evidence="3 5 6 7 11 20">Packages viral RNA to form a viral nucleocapsid, and promotes virion budding (Probable). Participates in the viral particle production as a result of its interaction with the non-structural protein 5A (By similarity). Binds RNA and may function as a RNA chaperone to induce the RNA structural rearrangements taking place during virus replication (By similarity). Modulates viral translation initiation by interacting with viral IRES and 40S ribosomal subunit (By similarity). Affects various cell signaling pathways, host immunity and lipid metabolism (Probable). Prevents the establishment of cellular antiviral state by blocking the interferon-alpha/beta (IFN-alpha/beta) and IFN-gamma signaling pathways and by blocking the formation of phosphorylated STAT1 and promoting ubiquitin-mediated proteasome-dependent degradation of STAT1 (By similarity). Activates STAT3 leading to cellular transformation (By similarity). Regulates the activity of cellular genes, including c-myc and c-fos (By similarity). May repress the promoter of p53, and sequester CREB3 and SP110 isoform 3/Sp110b in the cytoplasm (By similarity). Represses cell cycle negative regulating factor CDKN1A, thereby interrupting an important check point of normal cell cycle regulation (By similarity). Targets transcription factors involved in the regulation of inflammatory responses and in the immune response: suppresses TNF-induced NF-kappa-B activation, and activates AP-1 (By similarity). Binds to dendritic cells (DCs) via C1QR1, resulting in down-regulation of T-lymphocytes proliferation (By similarity). Alters lipid metabolism by interacting with hepatocellular proteins involved in lipid accumulation and storage (By similarity). Induces up-regulation of FAS promoter activity, and thereby contributes to the increased triglyceride accumulation in hepatocytes (steatosis) (By similarity).</text>
</comment>
<comment type="function">
    <molecule>Envelope glycoprotein E1</molecule>
    <text evidence="6">Forms a heterodimer with envelope glycoprotein E2, which mediates virus attachment to the host cell, virion internalization through clathrin-dependent endocytosis and fusion with host membrane (By similarity). Fusion with the host cell is most likely mediated by both E1 and E2, through conformational rearrangements of the heterodimer required for fusion rather than a classical class II fusion mechanism (By similarity). E1/E2 heterodimer binds host apolipoproteins such as APOB and APOE thereby forming a lipo-viro-particle (LVP) (By similarity). APOE associated to the LVP allows the initial virus attachment to cell surface receptors such as the heparan sulfate proteoglycans (HSPGs), syndecan-1 (SDC1), syndecan-1 (SDC2), the low-density lipoprotein receptor (LDLR) and scavenger receptor class B type I (SCARB1) (By similarity). The cholesterol transfer activity of SCARB1 allows E2 exposure and binding of E2 to SCARB1 and the tetraspanin CD81 (By similarity). E1/E2 heterodimer binding on CD81 activates the epithelial growth factor receptor (EGFR) signaling pathway (By similarity). Diffusion of the complex E1-E2-EGFR-SCARB1-CD81 to the cell lateral membrane allows further interaction with Claudin 1 (CLDN1) and occludin (OCLN) to finally trigger HCV entry (By similarity).</text>
</comment>
<comment type="function">
    <molecule>Envelope glycoprotein E2</molecule>
    <text evidence="5 6">Forms a heterodimer with envelope glycoprotein E1, which mediates virus attachment to the host cell, virion internalization through clathrin-dependent endocytosis and fusion with host membrane (By similarity). Fusion with the host cell is most likely mediated by both E1 and E2, through conformational rearrangements of the heterodimer required for fusion rather than a classical class II fusion mechanism (By similarity). The interaction between envelope glycoprotein E2 and host apolipoprotein E/APOE allows the proper assembly, maturation and infectivity of the viral particles (By similarity). This interaction is probably promoted via the up-regulation of cellular autophagy by the virus (By similarity). E1/E2 heterodimer binds host apolipoproteins such as APOB and APOE thereby forming a lipo-viro-particle (LVP) (By similarity). APOE associated to the LVP allows the initial virus attachment to cell surface receptors such as the heparan sulfate proteoglycans (HSPGs), syndecan-1 (SDC1), syndecan-1 (SDC2), the low-density lipoprotein receptor (LDLR) and scavenger receptor class B type I (SCARB1) (By similarity). The cholesterol transfer activity of SCARB1 allows E2 exposure and binding of E2 to SCARB1 and the tetraspanin CD81 (By similarity). E1/E2 heterodimer binding on CD81 activates the epithelial growth factor receptor (EGFR) signaling pathway (By similarity). Diffusion of the complex E1-E2-EGFR-SCARB1-CD81 to the cell lateral membrane allows further interaction with Claudin 1 (CLDN1) and occludin (OCLN) to finally trigger HCV entry (By similarity). Inhibits host EIF2AK2/PKR activation, preventing the establishment of an antiviral state (By similarity). Viral ligand for CD209/DC-SIGN and CLEC4M/DC-SIGNR, which are respectively found on dendritic cells (DCs), and on liver sinusoidal endothelial cells and macrophage-like cells of lymph node sinuses (By similarity). These interactions allow the capture of circulating HCV particles by these cells and subsequent facilitated transmission to permissive cells such as hepatocytes and lymphocyte subpopulations (By similarity). The interaction between E2 and host amino acid transporter complex formed by SLC3A2 and SLC7A5/LAT1 may facilitate viral entry into host cell (By similarity).</text>
</comment>
<comment type="function">
    <molecule>Viroporin p7</molecule>
    <text evidence="6 11 20">Ion channel protein that acts as a viroporin and plays an essential role in the assembly, envelopment and secretion of viral particles (By similarity). Regulates the host cell secretory pathway, which induces the intracellular retention of viral glycoproteins and favors assembly of viral particles (By similarity). Creates a pore in acidic organelles and releases Ca(2+) and H(+) in the cytoplasm of infected cells, leading to a productive viral infection (By similarity). High levels of cytoplasmic Ca(2+) may trigger membrane trafficking and transport of viral ER-associated proteins to viroplasms, sites of viral genome replication (Probable). This ionic imbalance induces the assembly of the inflammasome complex, which triggers the maturation of pro-IL-1beta into IL-1beta through the action of caspase-1 (By similarity). Targets also host mitochondria and induces mitochondrial depolarization (By similarity). In addition of its role as a viroporin, acts as a lipid raft adhesion factor (By similarity).</text>
</comment>
<comment type="function">
    <molecule>Protease NS2</molecule>
    <text evidence="4 6">Cysteine protease required for the proteolytic auto-cleavage between the non-structural proteins NS2 and NS3 (By similarity). The N-terminus of NS3 is required for the function of NS2 protease (active region NS2-3) (By similarity). Promotes the initiation of viral particle assembly by mediating the interaction between structural and non-structural proteins (By similarity).</text>
</comment>
<comment type="function">
    <molecule>Serine protease/helicase NS3</molecule>
    <text evidence="6 12">Displays three enzymatic activities: serine protease with a chymotrypsin-like fold, NTPase and RNA helicase (By similarity). NS3 serine protease, in association with NS4A, is responsible for the cleavages of NS3-NS4A, NS4A-NS4B, NS4B-NS5A and NS5A-NS5B (By similarity). The NS3/NS4A complex prevents phosphorylation of host IRF3, thus preventing the establishment of dsRNA induced antiviral state (By similarity). The NS3/NS4A complex induces host amino acid transporter component SLC3A2, thus contributing to HCV propagation (By similarity). NS3 RNA helicase binds to RNA and unwinds both dsDNA and dsRNA in the 3' to 5' direction, and likely resolves RNA complicated stable secondary structures in the template strand (By similarity). Binds a single ATP and catalyzes the unzipping of a single base pair of dsRNA (By similarity). Inhibits host antiviral proteins TBK1 and IRF3 thereby preventing the establishment of an antiviral state (By similarity). Cleaves host MAVS/CARDIF thereby preventing the establishment of an antiviral state (By similarity). Cleaves host TICAM1/TRIF, thereby disrupting TLR3 signaling and preventing the establishment of an antiviral state (By similarity).</text>
</comment>
<comment type="function">
    <molecule>Non-structural protein 4A</molecule>
    <text evidence="6 12">Peptide cofactor which forms a non-covalent complex with the N-terminal of NS3 serine protease (By similarity). The NS3/NS4A complex prevents phosphorylation of host IRF3, thus preventing the establishment of dsRNA induced antiviral state (By similarity). The NS3/NS4A complex induces host amino acid transporter component SLC3A2, thus contributing to HCV propagation (By similarity).</text>
</comment>
<comment type="function">
    <molecule>Non-structural protein 4B</molecule>
    <text evidence="6">Induces a specific membrane alteration that serves as a scaffold for the virus replication complex (By similarity). This membrane alteration gives rise to the so-called ER-derived membranous web that contains the replication complex (By similarity). NS4B self-interaction contributes to its function in membranous web formation (By similarity). Promotes host TRIF protein degradation in a CASP8-dependent manner thereby inhibiting host TLR3-mediated interferon signaling (By similarity). Disrupts the interaction between STING and TBK1 contributing to the inhibition of interferon signaling (By similarity).</text>
</comment>
<comment type="function">
    <molecule>Non-structural protein 5A</molecule>
    <text evidence="3 5 6 11 12">Phosphorylated protein that is indispensable for viral replication and assembly (By similarity). Both hypo- and hyperphosphorylated states are required for the viral life cycle (By similarity). The hyperphosphorylated form of NS5A is an inhibitor of viral replication (By similarity). Involved in RNA-binding and especially in binding to the viral genome (By similarity). Zinc is essential for RNA-binding (By similarity). Participates in the viral particle production as a result of its interaction with the mature viral core protein (By similarity). Its interaction with host VAPB may target the viral replication complex to vesicles (By similarity). Down-regulates viral IRES translation initiation (By similarity). Mediates interferon resistance, presumably by interacting with and inhibiting host EIF2AK2/PKR (By similarity). Prevents BIN1-induced apoptosis (By similarity). Acts as a transcriptional activator of some host genes important for viral replication when localized in the nucleus (By similarity). Via the interaction with host PACSIN2, modulates lipid droplet formation in order to promote virion assembly (By similarity). Modulates TNFRSF21/DR6 signaling pathway for viral propagation (By similarity).</text>
</comment>
<comment type="function">
    <molecule>RNA-directed RNA polymerase</molecule>
    <text evidence="6">RNA-dependent RNA polymerase that performs primer-template recognition and RNA synthesis during viral replication. Initiates RNA transcription/replication at a flavin adenine dinucleotide (FAD), resulting in a 5'- FAD cap on viral RNAs. In this way, recognition of viral 5' RNA by host pattern recognition receptors can be bypassed, thereby evading activation of antiviral pathways.</text>
</comment>
<comment type="catalytic activity">
    <molecule>Serine protease/helicase NS3</molecule>
    <reaction evidence="6">
        <text>Hydrolysis of four peptide bonds in the viral precursor polyprotein, commonly with Asp or Glu in the P6 position, Cys or Thr in P1 and Ser or Ala in P1'.</text>
        <dbReference type="EC" id="3.4.21.98"/>
    </reaction>
</comment>
<comment type="catalytic activity">
    <molecule>Serine protease/helicase NS3</molecule>
    <reaction evidence="6">
        <text>a ribonucleoside 5'-triphosphate + H2O = a ribonucleoside 5'-diphosphate + phosphate + H(+)</text>
        <dbReference type="Rhea" id="RHEA:23680"/>
        <dbReference type="ChEBI" id="CHEBI:15377"/>
        <dbReference type="ChEBI" id="CHEBI:15378"/>
        <dbReference type="ChEBI" id="CHEBI:43474"/>
        <dbReference type="ChEBI" id="CHEBI:57930"/>
        <dbReference type="ChEBI" id="CHEBI:61557"/>
        <dbReference type="EC" id="3.6.1.15"/>
    </reaction>
</comment>
<comment type="catalytic activity">
    <molecule>Serine protease/helicase NS3</molecule>
    <reaction evidence="6">
        <text>ATP + H2O = ADP + phosphate + H(+)</text>
        <dbReference type="Rhea" id="RHEA:13065"/>
        <dbReference type="ChEBI" id="CHEBI:15377"/>
        <dbReference type="ChEBI" id="CHEBI:15378"/>
        <dbReference type="ChEBI" id="CHEBI:30616"/>
        <dbReference type="ChEBI" id="CHEBI:43474"/>
        <dbReference type="ChEBI" id="CHEBI:456216"/>
        <dbReference type="EC" id="3.6.4.13"/>
    </reaction>
</comment>
<comment type="catalytic activity">
    <molecule>RNA-directed RNA polymerase</molecule>
    <reaction evidence="14">
        <text>RNA(n) + a ribonucleoside 5'-triphosphate = RNA(n+1) + diphosphate</text>
        <dbReference type="Rhea" id="RHEA:21248"/>
        <dbReference type="Rhea" id="RHEA-COMP:14527"/>
        <dbReference type="Rhea" id="RHEA-COMP:17342"/>
        <dbReference type="ChEBI" id="CHEBI:33019"/>
        <dbReference type="ChEBI" id="CHEBI:61557"/>
        <dbReference type="ChEBI" id="CHEBI:140395"/>
        <dbReference type="EC" id="2.7.7.48"/>
    </reaction>
</comment>
<comment type="cofactor">
    <molecule>Protease NS2</molecule>
    <cofactor evidence="4">
        <name>Zn(2+)</name>
        <dbReference type="ChEBI" id="CHEBI:29105"/>
    </cofactor>
    <text evidence="4">Activity of protease NS2 is dependent on zinc ions and completely inhibited by EDTA. This is probably due to the fact that NS2 protease activity needs NS3 N-terminus that binds a zinc atom (active region NS2-3).</text>
</comment>
<comment type="cofactor">
    <molecule>Serine protease/helicase NS3</molecule>
    <cofactor evidence="4">
        <name>Zn(2+)</name>
        <dbReference type="ChEBI" id="CHEBI:29105"/>
    </cofactor>
    <cofactor evidence="12">
        <name>Mg(2+)</name>
        <dbReference type="ChEBI" id="CHEBI:18420"/>
    </cofactor>
    <text evidence="4 12">Binds 1 zinc ion, which has a structural role (By similarity). The magnesium ion is essential for the helicase activity (By similarity).</text>
</comment>
<comment type="cofactor">
    <molecule>RNA-directed RNA polymerase</molecule>
    <cofactor evidence="4">
        <name>Mg(2+)</name>
        <dbReference type="ChEBI" id="CHEBI:18420"/>
    </cofactor>
    <text evidence="4">Binds 2 magnesium ion that constitute a dinuclear catalytic metal center.</text>
</comment>
<comment type="activity regulation">
    <text evidence="3 6">Inhibited by the antiviral drug hexamethylene amiloride (By similarity). Inhibition by amantadine appears to be genotype-dependent (By similarity). Also inhibited by long-alkyl-chain iminosugar derivatives (By similarity).</text>
</comment>
<comment type="activity regulation">
    <molecule>RNA-directed RNA polymerase</molecule>
    <text evidence="6">Activity is up-regulated by PRK2/PKN2-mediated phosphorylation.</text>
</comment>
<comment type="subunit">
    <molecule>Mature core protein</molecule>
    <text evidence="3 5 6 7 9 10 11">Homooligomer (By similarity). Interacts with E1 (via C-terminus) (By similarity). Interacts with the non-structural protein 5A (By similarity). Interacts (via N-terminus) with host STAT1 (via SH2 domain); this interaction results in decreased STAT1 phosphorylation and ubiquitin-mediated proteasome-dependent STAT1 degradation, leading to decreased IFN-stimulated gene transcription (By similarity). Interacts with host STAT3; this interaction constitutively activates STAT3 (By similarity). Interacts with host LTBR receptor (By similarity). Interacts with host TNFRSF1A receptor and possibly induces apoptosis (By similarity). Interacts with host HNRPK (By similarity). Interacts with host YWHAE (By similarity). Interacts with host UBE3A/E6AP (By similarity). Interacts with host DDX3X (By similarity). Interacts with host APOA2 (By similarity). Interacts with host RXRA protein (By similarity). Interacts with host SP110 isoform 3/Sp110b; this interaction sequesters the transcriptional corepressor SP110 away from the nucleus (By similarity). Interacts with host CREB3 nuclear transcription protein; this interaction triggers cell transformation (By similarity). Interacts with host ACY3 (By similarity). Interacts with host C1QR1 (By similarity). Interacts with host RBM24; this interaction, which enhances the interaction of the mature core protein with 5'-UTR, may inhibit viral translation and favor replication (By similarity). Interacts with host EIF2AK2/PKR; this interaction induces the autophosphorylation of EIF2AK2 (By similarity). Part of the viral assembly initiation complex composed of NS2, E1, E2, NS3, NS4A, NS5A and the mature core protein (By similarity).</text>
</comment>
<comment type="subunit">
    <molecule>Envelope glycoprotein E1</molecule>
    <text evidence="6 11">Forms a heterodimer with envelope glycoprotein E2 (By similarity). Interacts with mature core protein (By similarity). Interacts with protease NS2 (By similarity). The heterodimer E1/E2 interacts with host CLDN1; this interaction plays a role in viral entry into host cell (By similarity). Interacts with host SPSB2 (via C-terminus) (By similarity). Part of the viral assembly initiation complex composed of NS2, E1, E2, NS3, NS4A, NS5A and the mature core protein (By similarity). Interacts with host NEURL3; this interaction prevents E1 binding to glycoprotein E2 (By similarity).</text>
</comment>
<comment type="subunit">
    <molecule>Envelope glycoprotein E2</molecule>
    <text evidence="6 11 12">Forms a heterodimer with envelope glycoprotein E1 (By similarity). Interacts with host CD81 and SCARB1 receptors; these interactions play a role in viral entry into host cell (By similarity). Interacts with host EIF2AK2/PKR; this interaction inhibits EIF2AK2 and probably allows the virus to evade the innate immune response (By similarity). Interacts with host CD209/DC-SIGN and CLEC4M/DC-SIGNR (By similarity). Interact with host SPCS1; this interaction is essential for viral particle assembly (By similarity). Interacts with protease NS2 (By similarity). The heterodimer E1/E2 interacts with host CLDN1; this interaction plays a role in viral entry into host cell (By similarity). Part of the viral assembly initiation complex composed of NS2, E1, E2, NS3, NS4A, NS5A and the mature core protein (By similarity). Interacts with host SLC3A2/4F2hc; the interaction may facilitate viral entry into host cell (By similarity). Interacts with human PLSCR1 (By similarity).</text>
</comment>
<comment type="subunit">
    <molecule>Viroporin p7</molecule>
    <text evidence="2 6 11">Homohexamer (By similarity). Homoheptamer (By similarity). Interacts with protease NS2 (By similarity).</text>
</comment>
<comment type="subunit">
    <molecule>Protease NS2</molecule>
    <text evidence="6 11">Homodimer (By similarity). Interacts with host SPCS1; this interaction is essential for viral particle assembly (By similarity). Interacts with envelope glycoprotein E1 (By similarity). Interacts with envelope glycoprotein E2 (By similarity). Interacts with viroporin p7 (By similarity). Interacts with serine protease/helicase NS3 (By similarity). Part of the replication complex composed of NS2, NS3, NS4A, NS4B, NS5A and the RNA-directed RNA polymerase embedded in an ER-derived membranous web (By similarity). Part of the viral assembly initiation complex composed of NS2, E1, E2, NS3, NS4A, NS5A and the mature core protein (By similarity).</text>
</comment>
<comment type="subunit">
    <molecule>Serine protease/helicase NS3</molecule>
    <text evidence="4 6 11 12">Interacts with protease NS2 (By similarity). Interacts with non-structural protein 4A; this interaction stabilizes the folding of NS3 serine protease (By similarity). NS3-NS4A interaction is essential for NS3 activation and allows membrane anchorage of the latter (By similarity). NS3/NS4A complex also prevents phosphorylation of host IRF3, thus preventing the establishment of dsRNA induced antiviral state (By similarity). Interacts with host MAVS; this interaction leads to the cleavage and inhibition of host MAVS (By similarity). Interacts with host TICAM1; this interaction leads to the cleavage and inhibition of host TICAM1 (By similarity). Interacts with host TANK-binding kinase/TBK1; this interaction results in the inhibition of the association between TBK1 and IRF3, which leads to the inhibition of IRF3 activation (By similarity). Interacts with host RBM24 (By similarity). Part of the replication complex composed of NS2, NS3, NS4A, NS4B, NS5A and the RNA-directed RNA polymerase embedded in an ER-derived membranous web (By similarity). Part of the viral assembly initiation complex composed of NS2, E1, E2, NS3, NS4A, NS5A and the mature core protein (By similarity).</text>
</comment>
<comment type="subunit">
    <molecule>Non-structural protein 4A</molecule>
    <text evidence="3 4 6 11">Interacts with NS3 serine protease; this interaction stabilizes the folding of NS3 serine protease (By similarity). NS3-NS4A interaction is essential for NS3 activation and allows membrane anchorage of the latter (By similarity). Interacts with non-structural protein 5A (via N-terminus) (By similarity). Part of the replication complex composed of NS2, NS3, NS4A, NS4B, NS5A and the RNA-directed RNA polymerase embedded in an ER-derived membranous web (By similarity). Part of the viral assembly initiation complex composed of NS2, E1, E2, NS3, NS4A, NS5A and the mature core protein (By similarity).</text>
</comment>
<comment type="subunit">
    <molecule>Non-structural protein 4B</molecule>
    <text evidence="6 11">Homomultimer (By similarity). Interacts with non-structural protein NS5A (By similarity). Interacts with host PLA2G4C; this interaction likely initiates the recruitment of replication complexes to lipid droplets (By similarity). Interacts with host STING; this interaction disrupts the interaction between STING and TBK1 thereby suppressing the interferon signaling (By similarity). Part of the replication complex composed of NS2, NS3, NS4A, NS4B, NS5A and the RNA-directed RNA polymerase embedded in an ER-derived membranous web (By similarity).</text>
</comment>
<comment type="subunit">
    <molecule>Non-structural protein 5A</molecule>
    <text evidence="3 4 5 6 11">Monomer. Homodimer; dimerization is required for RNA-binding (By similarity). Interacts with the mature core protein (By similarity). Interacts (via N-terminus) with non-structural protein 4A (By similarity). Interacts with non-structural protein 4B. Interacts (via region D2) with RNA-directed RNA polymerase (By similarity). Part of the viral assembly initiation complex composed of NS2, E1, E2, NS3, NS4A, NS5A and the mature core protein (By similarity). Part of the replication complex composed of NS2, NS3, NS4A, NS4B, NS5A and the RNA-directed RNA polymerase embedded in an ER-derived membranous web (By similarity). Interacts with host GRB2 (By similarity). Interacts with host BIN1 (By similarity). Interacts with host PIK3R1 (By similarity). Interacts with host SRCAP (By similarity). Interacts with host FKBP8 (By similarity). Interacts (via C-terminus) with host VAPB (via MSP domain). Interacts with host EIF2AK2/PKR; this interaction leads to disruption of EIF2AK2 dimerization by NS5A and probably allows the virus to evade the innate immune response. Interacts (via N-terminus) with host PACSIN2 (via N-terminus); this interaction attenuates protein kinase C alpha-mediated phosphorylation of PACSIN2 by disrupting the interaction between PACSIN2 and PRKCA (By similarity). Interacts (via N-terminus) with host SRC kinase (via SH2 domain) (By similarity). Interacts with most Src-family kinases (By similarity). Interacts with host IFI27 and SKP2; promotes the ubiquitin-mediated proteasomal degradation of NS5A (By similarity). Interacts with host GPS2 (By similarity). Interacts with host TNFRSF21; this interaction allows the modulation by the virus of JNK, p38 MAPK, STAT3, and Akt signaling pathways in a DR6-dependent manner. Interacts (via N-terminus) with host CIDEB (via N-terminus); this interaction seems to regulate the association of HCV particles with APOE (By similarity). Interacts with host CHKA/Choline Kinase-alpha; CHKA bridges host PI4KA and NS5A and potentiates NS5A-stimulated PI4KA activity, which then facilitates the targeting of the ternary complex to the ER for viral replication (By similarity). Interacts with host SPSB2 (via C-terminus); this interaction targets NS5A for ubiquitination and degradation (By similarity). Interacts with host RAB18; this interaction may promote the association of NS5A and other replicase components with lipid droplets (By similarity). Interacts (via region D2) with host PPIA/CYPA; the interaction stimulates RNA-binding ability of NS5A and is dependent on the peptidyl-prolyl cis-trans isomerase activity of PPIA/CYPA. Interacts with host TRIM14; this interaction induces the degradation of NS5A (By similarity).</text>
</comment>
<comment type="subunit">
    <molecule>RNA-directed RNA polymerase</molecule>
    <text evidence="6">Homooligomer (By similarity). Interacts with non-structural protein 5A (By similarity). Interacts with host VAPB (By similarity). Interacts with host PRK2/PKN2 (By similarity). Interacts with host HNRNPA1 and SEPT6; these interactions facilitate viral replication (By similarity). Part of the replication complex composed of NS2, NS3, NS4A, NS4B, NS5A and the RNA-directed RNA polymerase (By similarity).</text>
</comment>
<comment type="interaction">
    <interactant intactId="EBI-10053030">
        <id>PRO_0000278754</id>
    </interactant>
    <interactant intactId="EBI-8073353">
        <id>O88942</id>
        <label>Nfatc1</label>
    </interactant>
    <organismsDiffer>true</organismsDiffer>
    <experiments>2</experiments>
</comment>
<comment type="subcellular location">
    <molecule>Core protein precursor</molecule>
    <subcellularLocation>
        <location evidence="5">Host endoplasmic reticulum membrane</location>
        <topology evidence="13">Single-pass membrane protein</topology>
    </subcellularLocation>
    <subcellularLocation>
        <location evidence="5">Host mitochondrion membrane</location>
        <topology evidence="13">Single-pass type I membrane protein</topology>
    </subcellularLocation>
    <text>The C-terminal transmembrane domain of the core protein precursor contains an ER signal leading the nascent polyprotein to the ER membrane.</text>
</comment>
<comment type="subcellular location">
    <molecule>Mature core protein</molecule>
    <subcellularLocation>
        <location evidence="11">Virion</location>
    </subcellularLocation>
    <subcellularLocation>
        <location evidence="11">Host cytoplasm</location>
    </subcellularLocation>
    <subcellularLocation>
        <location evidence="3">Host nucleus</location>
    </subcellularLocation>
    <subcellularLocation>
        <location evidence="11">Host lipid droplet</location>
    </subcellularLocation>
    <text evidence="6">Only a minor proportion of core protein is present in the nucleus (By similarity). Probably present on the surface of lipid droplets (By similarity).</text>
</comment>
<comment type="subcellular location">
    <molecule>Envelope glycoprotein E1</molecule>
    <subcellularLocation>
        <location evidence="20">Virion membrane</location>
        <topology evidence="20">Single-pass type I membrane protein</topology>
    </subcellularLocation>
    <subcellularLocation>
        <location>Host endoplasmic reticulum membrane</location>
        <topology evidence="6">Single-pass type I membrane protein</topology>
    </subcellularLocation>
    <text evidence="6">The C-terminal transmembrane domain acts as a signal sequence and forms a hairpin structure before cleavage by host signal peptidase (By similarity). After cleavage, the membrane sequence is retained at the C-terminus of the protein, serving as ER membrane anchor (By similarity). A reorientation of the second hydrophobic stretch occurs after cleavage producing a single reoriented transmembrane domain (By similarity). These events explain the final topology of the protein (By similarity).</text>
</comment>
<comment type="subcellular location">
    <molecule>Envelope glycoprotein E2</molecule>
    <subcellularLocation>
        <location evidence="20">Virion membrane</location>
        <topology evidence="20">Single-pass type I membrane protein</topology>
    </subcellularLocation>
    <subcellularLocation>
        <location>Host endoplasmic reticulum membrane</location>
        <topology evidence="6">Single-pass type I membrane protein</topology>
    </subcellularLocation>
    <subcellularLocation>
        <location evidence="12">Host lipid droplet</location>
    </subcellularLocation>
    <text evidence="6">The C-terminal transmembrane domain acts as a signal sequence and forms a hairpin structure before cleavage by host signal peptidase (By similarity). After cleavage, the membrane sequence is retained at the C-terminus of the protein, serving as ER membrane anchor (By similarity). A reorientation of the second hydrophobic stretch occurs after cleavage producing a single reoriented transmembrane domain (By similarity). These events explain the final topology of the protein (By similarity).</text>
</comment>
<comment type="subcellular location">
    <molecule>Viroporin p7</molecule>
    <subcellularLocation>
        <location evidence="6">Host endoplasmic reticulum membrane</location>
        <topology evidence="6">Multi-pass membrane protein</topology>
    </subcellularLocation>
    <subcellularLocation>
        <location evidence="6">Host mitochondrion</location>
    </subcellularLocation>
    <subcellularLocation>
        <location evidence="6">Host cell membrane</location>
    </subcellularLocation>
    <text evidence="6">The C-terminus of p7 membrane domain acts as a signal sequence (By similarity). After cleavage by host signal peptidase, the membrane sequence is retained at the C-terminus of the protein, serving as ER membrane anchor (By similarity). ER retention of p7 is leaky and a small fraction reaches the plasma membrane (By similarity).</text>
</comment>
<comment type="subcellular location">
    <molecule>Protease NS2</molecule>
    <subcellularLocation>
        <location evidence="6">Host endoplasmic reticulum membrane</location>
        <topology evidence="6">Multi-pass membrane protein</topology>
    </subcellularLocation>
    <subcellularLocation>
        <location evidence="12">Host lipid droplet</location>
    </subcellularLocation>
    <text evidence="11">Probably present on the surface of lipid droplets.</text>
</comment>
<comment type="subcellular location">
    <molecule>Serine protease/helicase NS3</molecule>
    <subcellularLocation>
        <location evidence="20">Host endoplasmic reticulum membrane</location>
        <topology evidence="20">Peripheral membrane protein</topology>
    </subcellularLocation>
    <text evidence="20">NS3 is associated to the ER membrane through its binding to NS4A.</text>
</comment>
<comment type="subcellular location">
    <molecule>Non-structural protein 4A</molecule>
    <subcellularLocation>
        <location evidence="20">Host endoplasmic reticulum membrane</location>
        <topology evidence="20">Single-pass type I membrane protein</topology>
    </subcellularLocation>
    <text>Host membrane insertion occurs after processing by the NS3 protease.</text>
</comment>
<comment type="subcellular location">
    <molecule>Non-structural protein 4B</molecule>
    <subcellularLocation>
        <location evidence="6">Host endoplasmic reticulum membrane</location>
        <topology evidence="6">Multi-pass membrane protein</topology>
    </subcellularLocation>
    <text evidence="6">A reorientation of the N-terminus into the ER lumen occurs post-translationally.</text>
</comment>
<comment type="subcellular location">
    <molecule>Non-structural protein 5A</molecule>
    <subcellularLocation>
        <location evidence="6">Host endoplasmic reticulum membrane</location>
        <topology evidence="6">Peripheral membrane protein</topology>
    </subcellularLocation>
    <subcellularLocation>
        <location evidence="6">Host cytoplasm</location>
        <location evidence="6">Host perinuclear region</location>
    </subcellularLocation>
    <subcellularLocation>
        <location evidence="3">Host mitochondrion</location>
    </subcellularLocation>
    <subcellularLocation>
        <location evidence="6">Host cytoplasm</location>
    </subcellularLocation>
    <subcellularLocation>
        <location evidence="3">Host nucleus</location>
    </subcellularLocation>
    <subcellularLocation>
        <location evidence="12">Host lipid droplet</location>
    </subcellularLocation>
    <text evidence="3 6">Host membrane insertion occurs after processing by the NS3 protease (By similarity). Localizes at the surface of lipid droplets (By similarity).</text>
</comment>
<comment type="subcellular location">
    <molecule>RNA-directed RNA polymerase</molecule>
    <subcellularLocation>
        <location evidence="6">Host cytoplasm</location>
    </subcellularLocation>
    <subcellularLocation>
        <location>Host endoplasmic reticulum membrane</location>
        <topology evidence="6">Single-pass type IV membrane protein</topology>
    </subcellularLocation>
    <text evidence="6">Host membrane insertion occurs after processing by the NS3 protease.</text>
</comment>
<comment type="domain">
    <molecule>Envelope glycoprotein E1</molecule>
    <text evidence="6">The transmembrane regions of envelope E1 and E2 glycoproteins are involved in heterodimer formation, ER localization, and assembly of these proteins.</text>
</comment>
<comment type="domain">
    <molecule>Envelope glycoprotein E2</molecule>
    <text evidence="4 6">The transmembrane regions of envelope E1 and E2 glycoproteins are involved in heterodimer formation, ER localization, and assembly of these proteins (By similarity). Envelope E2 glycoprotein contain two highly variable regions called hypervariable region 1 and 2 (HVR1 and HVR2) (By similarity). E2 also contain two segments involved in CD81-binding (By similarity). HVR1 is implicated in the SCARB1-mediated cell entry and probably acts as a regulator of the association of particles with lipids (By similarity).</text>
</comment>
<comment type="domain">
    <molecule>Protease NS2</molecule>
    <text evidence="4">The N-terminus of NS3 is required for the catalytic activity of protease NS2 (By similarity). The minimal catalytic region includes the C-terminus of NS2 and the N-terminus NS3 protease domain (active region NS2-3) (By similarity).</text>
</comment>
<comment type="domain">
    <molecule>Serine protease/helicase NS3</molecule>
    <text evidence="3 6">The N-terminal one-third contains the protease activity (By similarity). This region contains a zinc atom that does not belong to the active site, but may play a structural rather than a catalytic role (By similarity). This region is essential for the activity of protease NS2, maybe by contributing to the folding of the latter (By similarity). The NTPase/helicase activity is located in the twothirds C-terminus of NS3, this domain contains the NTPase and RNA-binding regions (By similarity).</text>
</comment>
<comment type="domain">
    <molecule>Non-structural protein 4B</molecule>
    <text evidence="11">Contains a glycine zipper region that critically contributes to the biogenesis of functional ER-derived replication organelles.</text>
</comment>
<comment type="domain">
    <molecule>Non-structural protein 5A</molecule>
    <text evidence="3 6">The N-terminus of NS5A acts as membrane anchor (By similarity). The central part of NS5A contains a variable region called interferon sensitivity determining region (ISDR) and seems to be intrinsically disordered and interacts with NS5B and host EIF2AK2 (By similarity). The C-terminus of NS5A contains a variable region called variable region 3 (V3) (By similarity). ISDR and V3 may be involved in sensitivity and/or resistance to IFN-alpha therapy (By similarity). The C-terminus contains a nuclear localization signal (By similarity). The SH3-binding domain is involved in the interaction with host BIN1, GRB2 and Src-family kinases (By similarity).</text>
</comment>
<comment type="PTM">
    <molecule>Genome polyprotein</molecule>
    <text evidence="5 6 19">Specific enzymatic cleavages in vivo yield mature proteins (By similarity). The structural proteins, core, E1, E2 and p7 are produced by proteolytic processing by host signal peptidases (By similarity). The core protein precursor is synthesized as a 23 kDa, which is retained in the ER membrane through the hydrophobic signal peptide (By similarity). Cleavage by the signal peptidase releases the 21 kDa mature core protein (PubMed:15479818). The cleavage of the core protein precursor occurs between aminoacids 176 and 188 but the exact cleavage site is not known (PubMed:15479818). Some degraded forms of the core protein appear as well during the course of infection (By similarity). The other proteins (p7, NS2, NS3, NS4A, NS4B, NS5A and NS5B) are cleaved by the viral proteases (By similarity). Autoprocessing between NS2 and NS3 is mediated by the NS2 cysteine protease catalytic domain and regulated by the NS3 N-terminal domain (By similarity).</text>
</comment>
<comment type="PTM">
    <molecule>Mature core protein</molecule>
    <text evidence="8">Phosphorylated by host PKC and PKA.</text>
</comment>
<comment type="PTM">
    <molecule>Mature core protein</molecule>
    <text evidence="9">Ubiquitinated; mediated by UBE3A and leading to core protein subsequent proteasomal degradation.</text>
</comment>
<comment type="PTM">
    <molecule>Envelope glycoprotein E1</molecule>
    <text evidence="6">Highly N-glycosylated.</text>
</comment>
<comment type="PTM">
    <molecule>Envelope glycoprotein E2</molecule>
    <text evidence="6">Highly N-glycosylated.</text>
</comment>
<comment type="PTM">
    <molecule>Protease NS2</molecule>
    <text evidence="6">Palmitoylation is required for NS2/3 autoprocessing and E2 recruitment to membranes.</text>
</comment>
<comment type="PTM">
    <molecule>Non-structural protein 4B</molecule>
    <text evidence="6">Palmitoylated. This modification may play a role in its polymerization or in protein-protein interactions.</text>
</comment>
<comment type="PTM">
    <molecule>Non-structural protein 5A</molecule>
    <text evidence="3 5">Phosphorylated on serines in a basal form termed p56 (By similarity). p58 is a hyperphosphorylated form of p56 (By similarity). p56 and p58 coexist in the cell in roughly equivalent amounts (By similarity). Hyperphosphorylation is dependent on the presence of NS4A (By similarity). Host CSNK1A1/CKI-alpha or RPS6KB1 kinases may be responsible for NS5A phosphorylation (By similarity).</text>
</comment>
<comment type="PTM">
    <molecule>Non-structural protein 5A</molecule>
    <text evidence="11">Tyrosine phosphorylation is essential for the interaction with host SRC.</text>
</comment>
<comment type="PTM">
    <molecule>Non-structural protein 5A</molecule>
    <text evidence="6">Ubiquitinated (By similarity). Ubiquitination, most probably at Lys-2350, mediated by host IFI27 and SKP2 leads to proteasomal degradation, restricting viral infection (By similarity). Ubiquitination by host TRIM22 leads to interruption of viral replication (By similarity).</text>
</comment>
<comment type="PTM">
    <molecule>RNA-directed RNA polymerase</molecule>
    <text evidence="3">The N-terminus is phosphorylated by host PRK2/PKN2.</text>
</comment>
<comment type="miscellaneous">
    <text evidence="20">Viral particle assembly takes place at the surface of ER-derived membranes in close proximity to lipid droplets. NS2 associates with E1/E2 glycoproteins, NS3 and NS5A, which interacts with the viral RNA and core protein to promote genome encapsidation. The nucleocapsid buds at the ER membrane where E1/E2 glycoproteins are anchored and afterward associate with nascent lipid droplet to acquire APOE and APOC. Secretion of viral particles is probably regulated by viroporin p7.</text>
</comment>
<comment type="miscellaneous">
    <molecule>Non-structural protein 5A</molecule>
    <text evidence="20">Cell culture adaptation of the virus leads to mutations in NS5A, reducing its inhibitory effect on replication.</text>
</comment>
<comment type="miscellaneous">
    <molecule>Mature core protein</molecule>
    <text evidence="3">Exerts viral interference on hepatitis B virus when HCV and HBV coinfect the same cell, by suppressing HBV gene expression, RNA encapsidation and budding.</text>
</comment>
<comment type="similarity">
    <text evidence="20">Belongs to the hepacivirus polyprotein family.</text>
</comment>
<comment type="caution">
    <text evidence="20">The core gene probably also codes for alternative reading frame proteins (ARFPs). Many functions depicted for the core protein might belong to the ARFPs.</text>
</comment>
<accession>Q913V3</accession>
<proteinExistence type="evidence at protein level"/>
<name>POLG_HCVR6</name>
<organismHost>
    <name type="scientific">Homo sapiens</name>
    <name type="common">Human</name>
    <dbReference type="NCBI Taxonomy" id="9606"/>
</organismHost>
<evidence type="ECO:0000250" key="1"/>
<evidence type="ECO:0000250" key="2">
    <source>
        <dbReference type="UniProtKB" id="O92972"/>
    </source>
</evidence>
<evidence type="ECO:0000250" key="3">
    <source>
        <dbReference type="UniProtKB" id="P26662"/>
    </source>
</evidence>
<evidence type="ECO:0000250" key="4">
    <source>
        <dbReference type="UniProtKB" id="P26663"/>
    </source>
</evidence>
<evidence type="ECO:0000250" key="5">
    <source>
        <dbReference type="UniProtKB" id="P26664"/>
    </source>
</evidence>
<evidence type="ECO:0000250" key="6">
    <source>
        <dbReference type="UniProtKB" id="P27958"/>
    </source>
</evidence>
<evidence type="ECO:0000250" key="7">
    <source>
        <dbReference type="UniProtKB" id="P29846"/>
    </source>
</evidence>
<evidence type="ECO:0000250" key="8">
    <source>
        <dbReference type="UniProtKB" id="Q01403"/>
    </source>
</evidence>
<evidence type="ECO:0000250" key="9">
    <source>
        <dbReference type="UniProtKB" id="Q03463"/>
    </source>
</evidence>
<evidence type="ECO:0000250" key="10">
    <source>
        <dbReference type="UniProtKB" id="Q5EG65"/>
    </source>
</evidence>
<evidence type="ECO:0000250" key="11">
    <source>
        <dbReference type="UniProtKB" id="Q99IB8"/>
    </source>
</evidence>
<evidence type="ECO:0000250" key="12">
    <source>
        <dbReference type="UniProtKB" id="Q9WMX2"/>
    </source>
</evidence>
<evidence type="ECO:0000255" key="13"/>
<evidence type="ECO:0000255" key="14">
    <source>
        <dbReference type="PROSITE-ProRule" id="PRU00539"/>
    </source>
</evidence>
<evidence type="ECO:0000255" key="15">
    <source>
        <dbReference type="PROSITE-ProRule" id="PRU00541"/>
    </source>
</evidence>
<evidence type="ECO:0000255" key="16">
    <source>
        <dbReference type="PROSITE-ProRule" id="PRU01030"/>
    </source>
</evidence>
<evidence type="ECO:0000255" key="17">
    <source>
        <dbReference type="PROSITE-ProRule" id="PRU01166"/>
    </source>
</evidence>
<evidence type="ECO:0000256" key="18">
    <source>
        <dbReference type="SAM" id="MobiDB-lite"/>
    </source>
</evidence>
<evidence type="ECO:0000269" key="19">
    <source>
    </source>
</evidence>
<evidence type="ECO:0000305" key="20"/>
<feature type="initiator methionine" description="Removed; by host" evidence="5">
    <location>
        <position position="1"/>
    </location>
</feature>
<feature type="chain" id="PRO_0000450923" description="Genome polyprotein">
    <location>
        <begin position="2"/>
        <end position="3010"/>
    </location>
</feature>
<feature type="chain" id="PRO_0000278754" description="Core protein precursor">
    <location>
        <begin position="2"/>
        <end position="191"/>
    </location>
</feature>
<feature type="chain" id="PRO_0000278755" description="Mature core protein">
    <location>
        <begin position="2"/>
        <end position="177"/>
    </location>
</feature>
<feature type="propeptide" id="PRO_0000278756" description="ER anchor for the core protein, removed in mature form by host signal peptidase">
    <location>
        <begin position="178"/>
        <end position="191"/>
    </location>
</feature>
<feature type="chain" id="PRO_0000278757" description="Envelope glycoprotein E1">
    <location>
        <begin position="192"/>
        <end position="383"/>
    </location>
</feature>
<feature type="chain" id="PRO_0000278758" description="Envelope glycoprotein E2">
    <location>
        <begin position="384"/>
        <end position="746"/>
    </location>
</feature>
<feature type="chain" id="PRO_0000278759" description="Viroporin p7">
    <location>
        <begin position="747"/>
        <end position="809"/>
    </location>
</feature>
<feature type="chain" id="PRO_0000278760" description="Protease NS2" evidence="16">
    <location>
        <begin position="810"/>
        <end position="1026"/>
    </location>
</feature>
<feature type="chain" id="PRO_0000278761" description="Serine protease/helicase NS3">
    <location>
        <begin position="1027"/>
        <end position="1657"/>
    </location>
</feature>
<feature type="chain" id="PRO_0000278762" description="Non-structural protein 4A">
    <location>
        <begin position="1658"/>
        <end position="1711"/>
    </location>
</feature>
<feature type="chain" id="PRO_0000278763" description="Non-structural protein 4B">
    <location>
        <begin position="1712"/>
        <end position="1972"/>
    </location>
</feature>
<feature type="chain" id="PRO_0000278764" description="Non-structural protein 5A">
    <location>
        <begin position="1973"/>
        <end position="2419"/>
    </location>
</feature>
<feature type="chain" id="PRO_0000278765" description="RNA-directed RNA polymerase">
    <location>
        <begin position="2420"/>
        <end position="3010"/>
    </location>
</feature>
<feature type="topological domain" description="Cytoplasmic" evidence="13">
    <location>
        <begin position="2"/>
        <end position="168"/>
    </location>
</feature>
<feature type="transmembrane region" description="Helical" evidence="13">
    <location>
        <begin position="169"/>
        <end position="189"/>
    </location>
</feature>
<feature type="topological domain" description="Lumenal" evidence="6">
    <location>
        <begin position="190"/>
        <end position="358"/>
    </location>
</feature>
<feature type="transmembrane region" description="Helical" evidence="6">
    <location>
        <begin position="359"/>
        <end position="379"/>
    </location>
</feature>
<feature type="topological domain" description="Lumenal" evidence="6">
    <location>
        <begin position="380"/>
        <end position="725"/>
    </location>
</feature>
<feature type="transmembrane region" description="Helical" evidence="6">
    <location>
        <begin position="726"/>
        <end position="746"/>
    </location>
</feature>
<feature type="topological domain" description="Lumenal" evidence="6">
    <location>
        <begin position="747"/>
        <end position="757"/>
    </location>
</feature>
<feature type="transmembrane region" description="Helical" evidence="6">
    <location>
        <begin position="758"/>
        <end position="778"/>
    </location>
</feature>
<feature type="topological domain" description="Cytoplasmic" evidence="6">
    <location>
        <begin position="779"/>
        <end position="781"/>
    </location>
</feature>
<feature type="transmembrane region" description="Helical" evidence="6">
    <location>
        <begin position="782"/>
        <end position="803"/>
    </location>
</feature>
<feature type="topological domain" description="Lumenal" evidence="6">
    <location>
        <begin position="804"/>
        <end position="813"/>
    </location>
</feature>
<feature type="transmembrane region" description="Helical" evidence="12">
    <location>
        <begin position="814"/>
        <end position="834"/>
    </location>
</feature>
<feature type="topological domain" description="Cytoplasmic" evidence="12">
    <location>
        <begin position="835"/>
        <end position="838"/>
    </location>
</feature>
<feature type="transmembrane region" description="Helical" evidence="12">
    <location>
        <begin position="839"/>
        <end position="859"/>
    </location>
</feature>
<feature type="topological domain" description="Lumenal" evidence="12">
    <location>
        <begin position="860"/>
        <end position="881"/>
    </location>
</feature>
<feature type="transmembrane region" description="Helical" evidence="12">
    <location>
        <begin position="882"/>
        <end position="902"/>
    </location>
</feature>
<feature type="topological domain" description="Cytoplasmic" evidence="12">
    <location>
        <begin position="903"/>
        <end position="1657"/>
    </location>
</feature>
<feature type="transmembrane region" description="Helical" evidence="13">
    <location>
        <begin position="1658"/>
        <end position="1678"/>
    </location>
</feature>
<feature type="topological domain" description="Cytoplasmic" evidence="13">
    <location>
        <begin position="1679"/>
        <end position="1805"/>
    </location>
</feature>
<feature type="transmembrane region" description="Helical" evidence="13">
    <location>
        <begin position="1806"/>
        <end position="1824"/>
    </location>
</feature>
<feature type="topological domain" description="Lumenal" evidence="6">
    <location>
        <begin position="1825"/>
        <end position="1828"/>
    </location>
</feature>
<feature type="transmembrane region" description="Helical" evidence="13">
    <location>
        <begin position="1829"/>
        <end position="1849"/>
    </location>
</feature>
<feature type="topological domain" description="Cytoplasmic" evidence="13">
    <location>
        <position position="1850"/>
    </location>
</feature>
<feature type="transmembrane region" description="Helical" evidence="13">
    <location>
        <begin position="1851"/>
        <end position="1871"/>
    </location>
</feature>
<feature type="topological domain" description="Lumenal" evidence="13">
    <location>
        <begin position="1872"/>
        <end position="1881"/>
    </location>
</feature>
<feature type="transmembrane region" description="Helical" evidence="13">
    <location>
        <begin position="1882"/>
        <end position="1902"/>
    </location>
</feature>
<feature type="topological domain" description="Cytoplasmic" evidence="13">
    <location>
        <begin position="1903"/>
        <end position="1972"/>
    </location>
</feature>
<feature type="intramembrane region" evidence="6">
    <location>
        <begin position="1973"/>
        <end position="2002"/>
    </location>
</feature>
<feature type="topological domain" description="Cytoplasmic" evidence="6">
    <location>
        <begin position="2003"/>
        <end position="2989"/>
    </location>
</feature>
<feature type="transmembrane region" description="Helical" evidence="6">
    <location>
        <begin position="2990"/>
        <end position="3010"/>
    </location>
</feature>
<feature type="domain" description="Peptidase C18" evidence="16">
    <location>
        <begin position="903"/>
        <end position="1026"/>
    </location>
</feature>
<feature type="domain" description="Peptidase S29" evidence="17">
    <location>
        <begin position="1027"/>
        <end position="1208"/>
    </location>
</feature>
<feature type="domain" description="Helicase ATP-binding" evidence="15">
    <location>
        <begin position="1217"/>
        <end position="1369"/>
    </location>
</feature>
<feature type="domain" description="RdRp catalytic" evidence="14">
    <location>
        <begin position="2633"/>
        <end position="2751"/>
    </location>
</feature>
<feature type="region of interest" description="Disordered" evidence="6">
    <location>
        <begin position="2"/>
        <end position="75"/>
    </location>
</feature>
<feature type="region of interest" description="Interaction with DDX3X" evidence="10">
    <location>
        <begin position="2"/>
        <end position="59"/>
    </location>
</feature>
<feature type="region of interest" description="Interaction with EIF2AK2/PKR" evidence="3">
    <location>
        <begin position="2"/>
        <end position="58"/>
    </location>
</feature>
<feature type="region of interest" description="Interaction with STAT1" evidence="3">
    <location>
        <begin position="2"/>
        <end position="23"/>
    </location>
</feature>
<feature type="region of interest" description="Important for endoplasmic reticulum and mitochondrial localization" evidence="3">
    <location>
        <begin position="112"/>
        <end position="152"/>
    </location>
</feature>
<feature type="region of interest" description="Interaction with APOA2" evidence="7">
    <location>
        <begin position="122"/>
        <end position="173"/>
    </location>
</feature>
<feature type="region of interest" description="Important for lipid droplets localization" evidence="6">
    <location>
        <begin position="164"/>
        <end position="167"/>
    </location>
</feature>
<feature type="region of interest" description="Important for fusion" evidence="6">
    <location>
        <begin position="265"/>
        <end position="296"/>
    </location>
</feature>
<feature type="region of interest" description="HVR1" evidence="6">
    <location>
        <begin position="385"/>
        <end position="411"/>
    </location>
</feature>
<feature type="region of interest" description="HVR2" evidence="6">
    <location>
        <begin position="474"/>
        <end position="479"/>
    </location>
</feature>
<feature type="region of interest" description="CD81-binding 1" evidence="4">
    <location>
        <begin position="480"/>
        <end position="493"/>
    </location>
</feature>
<feature type="region of interest" description="CD81-binding 2" evidence="4">
    <location>
        <begin position="544"/>
        <end position="551"/>
    </location>
</feature>
<feature type="region of interest" description="PKR/eIF2-alpha phosphorylation homology domain (PePHD)" evidence="1">
    <location>
        <begin position="660"/>
        <end position="671"/>
    </location>
</feature>
<feature type="region of interest" description="Protease NS2-3" evidence="4">
    <location>
        <begin position="904"/>
        <end position="1206"/>
    </location>
</feature>
<feature type="region of interest" description="Interaction with host SCPS1" evidence="11">
    <location>
        <begin position="929"/>
        <end position="949"/>
    </location>
</feature>
<feature type="region of interest" description="RNA-binding" evidence="4">
    <location>
        <begin position="1486"/>
        <end position="1497"/>
    </location>
</feature>
<feature type="region of interest" description="NS3-binding" evidence="6">
    <location>
        <begin position="1679"/>
        <end position="1690"/>
    </location>
</feature>
<feature type="region of interest" description="Transcriptional activation" evidence="13">
    <location>
        <begin position="2120"/>
        <end position="2332"/>
    </location>
</feature>
<feature type="region of interest" description="FKBP8-binding" evidence="3">
    <location>
        <begin position="2120"/>
        <end position="2208"/>
    </location>
</feature>
<feature type="region of interest" description="Interaction with non-structural protein 4A" evidence="3">
    <location>
        <begin position="2135"/>
        <end position="2139"/>
    </location>
</feature>
<feature type="region of interest" description="Interaction with host SKP2" evidence="6">
    <location>
        <begin position="2189"/>
        <end position="2441"/>
    </location>
</feature>
<feature type="region of interest" description="Interaction with EIF2AK2/PKR" evidence="4">
    <location>
        <begin position="2210"/>
        <end position="2275"/>
    </location>
</feature>
<feature type="region of interest" description="ISDR" evidence="3">
    <location>
        <begin position="2210"/>
        <end position="2249"/>
    </location>
</feature>
<feature type="region of interest" description="NS4B-binding" evidence="13">
    <location>
        <begin position="2249"/>
        <end position="2306"/>
    </location>
</feature>
<feature type="region of interest" description="Disordered" evidence="18">
    <location>
        <begin position="2351"/>
        <end position="2407"/>
    </location>
</feature>
<feature type="region of interest" description="V3" evidence="1">
    <location>
        <begin position="2354"/>
        <end position="2377"/>
    </location>
</feature>
<feature type="short sequence motif" description="Nuclear localization signal" evidence="11">
    <location>
        <begin position="5"/>
        <end position="13"/>
    </location>
</feature>
<feature type="short sequence motif" description="Nuclear localization signal" evidence="11">
    <location>
        <begin position="38"/>
        <end position="43"/>
    </location>
</feature>
<feature type="short sequence motif" description="Nuclear localization signal" evidence="11">
    <location>
        <begin position="58"/>
        <end position="64"/>
    </location>
</feature>
<feature type="short sequence motif" description="Nuclear localization signal" evidence="11">
    <location>
        <begin position="66"/>
        <end position="71"/>
    </location>
</feature>
<feature type="short sequence motif" description="DECH box" evidence="11">
    <location>
        <begin position="1316"/>
        <end position="1319"/>
    </location>
</feature>
<feature type="short sequence motif" description="SH3-binding" evidence="13">
    <location>
        <begin position="2322"/>
        <end position="2325"/>
    </location>
</feature>
<feature type="short sequence motif" description="Nuclear localization signal" evidence="3">
    <location>
        <begin position="2326"/>
        <end position="2334"/>
    </location>
</feature>
<feature type="compositionally biased region" description="Basic residues" evidence="18">
    <location>
        <begin position="7"/>
        <end position="16"/>
    </location>
</feature>
<feature type="compositionally biased region" description="Low complexity" evidence="18">
    <location>
        <begin position="32"/>
        <end position="47"/>
    </location>
</feature>
<feature type="compositionally biased region" description="Polar residues" evidence="18">
    <location>
        <begin position="2351"/>
        <end position="2365"/>
    </location>
</feature>
<feature type="active site" description="For protease NS2 activity; shared with dimeric partner" evidence="16">
    <location>
        <position position="952"/>
    </location>
</feature>
<feature type="active site" description="For protease NS2 activity; shared with dimeric partner" evidence="16">
    <location>
        <position position="972"/>
    </location>
</feature>
<feature type="active site" description="For protease NS2 activity; shared with dimeric partner" evidence="16">
    <location>
        <position position="993"/>
    </location>
</feature>
<feature type="active site" description="Charge relay system; for serine protease NS3 activity" evidence="17">
    <location>
        <position position="1083"/>
    </location>
</feature>
<feature type="active site" description="Charge relay system; for serine protease NS3 activity" evidence="17">
    <location>
        <position position="1107"/>
    </location>
</feature>
<feature type="active site" description="Charge relay system; for serine protease NS3 activity" evidence="17">
    <location>
        <position position="1165"/>
    </location>
</feature>
<feature type="binding site" evidence="17">
    <location>
        <position position="1123"/>
    </location>
    <ligand>
        <name>Zn(2+)</name>
        <dbReference type="ChEBI" id="CHEBI:29105"/>
        <label>1</label>
        <note>structural; for NS3 protease activity and NS2/3 auto-cleavage activity</note>
    </ligand>
</feature>
<feature type="binding site" evidence="17">
    <location>
        <position position="1125"/>
    </location>
    <ligand>
        <name>Zn(2+)</name>
        <dbReference type="ChEBI" id="CHEBI:29105"/>
        <label>1</label>
        <note>structural; for NS3 protease activity and NS2/3 auto-cleavage activity</note>
    </ligand>
</feature>
<feature type="binding site" evidence="17">
    <location>
        <position position="1171"/>
    </location>
    <ligand>
        <name>Zn(2+)</name>
        <dbReference type="ChEBI" id="CHEBI:29105"/>
        <label>1</label>
        <note>structural; for NS3 protease activity and NS2/3 auto-cleavage activity</note>
    </ligand>
</feature>
<feature type="binding site" evidence="17">
    <location>
        <position position="1175"/>
    </location>
    <ligand>
        <name>Zn(2+)</name>
        <dbReference type="ChEBI" id="CHEBI:29105"/>
        <label>1</label>
        <note>structural; for NS3 protease activity and NS2/3 auto-cleavage activity</note>
    </ligand>
</feature>
<feature type="binding site" evidence="15">
    <location>
        <begin position="1230"/>
        <end position="1237"/>
    </location>
    <ligand>
        <name>ATP</name>
        <dbReference type="ChEBI" id="CHEBI:30616"/>
    </ligand>
</feature>
<feature type="binding site" evidence="12">
    <location>
        <position position="1237"/>
    </location>
    <ligand>
        <name>Mg(2+)</name>
        <dbReference type="ChEBI" id="CHEBI:18420"/>
        <label>1</label>
        <note>catalytic; for NS3 helicase activity</note>
    </ligand>
</feature>
<feature type="binding site" evidence="12">
    <location>
        <position position="1317"/>
    </location>
    <ligand>
        <name>Mg(2+)</name>
        <dbReference type="ChEBI" id="CHEBI:18420"/>
        <label>1</label>
        <note>catalytic; for NS3 helicase activity</note>
    </ligand>
</feature>
<feature type="binding site" evidence="12">
    <location>
        <position position="2011"/>
    </location>
    <ligand>
        <name>Zn(2+)</name>
        <dbReference type="ChEBI" id="CHEBI:29105"/>
        <label>2</label>
        <note>structural</note>
    </ligand>
</feature>
<feature type="binding site" evidence="12">
    <location>
        <position position="2029"/>
    </location>
    <ligand>
        <name>Zn(2+)</name>
        <dbReference type="ChEBI" id="CHEBI:29105"/>
        <label>2</label>
        <note>structural</note>
    </ligand>
</feature>
<feature type="binding site" evidence="12">
    <location>
        <position position="2031"/>
    </location>
    <ligand>
        <name>Zn(2+)</name>
        <dbReference type="ChEBI" id="CHEBI:29105"/>
        <label>2</label>
        <note>structural</note>
    </ligand>
</feature>
<feature type="binding site" evidence="12">
    <location>
        <position position="2052"/>
    </location>
    <ligand>
        <name>Zn(2+)</name>
        <dbReference type="ChEBI" id="CHEBI:29105"/>
        <label>2</label>
        <note>structural</note>
    </ligand>
</feature>
<feature type="binding site" evidence="4">
    <location>
        <position position="2639"/>
    </location>
    <ligand>
        <name>Mg(2+)</name>
        <dbReference type="ChEBI" id="CHEBI:18420"/>
        <label>2</label>
        <note>catalytic; for RNA-directed RNA polymerase activity</note>
    </ligand>
</feature>
<feature type="binding site" evidence="4">
    <location>
        <position position="2737"/>
    </location>
    <ligand>
        <name>Mg(2+)</name>
        <dbReference type="ChEBI" id="CHEBI:18420"/>
        <label>2</label>
        <note>catalytic; for RNA-directed RNA polymerase activity</note>
    </ligand>
</feature>
<feature type="binding site" evidence="4">
    <location>
        <position position="2738"/>
    </location>
    <ligand>
        <name>Mg(2+)</name>
        <dbReference type="ChEBI" id="CHEBI:18420"/>
        <label>2</label>
        <note>catalytic; for RNA-directed RNA polymerase activity</note>
    </ligand>
</feature>
<feature type="site" description="Cleavage; by host signal peptide peptidase" evidence="19">
    <location>
        <begin position="177"/>
        <end position="178"/>
    </location>
</feature>
<feature type="site" description="Cleavage; by host signal peptidase" evidence="3">
    <location>
        <begin position="191"/>
        <end position="192"/>
    </location>
</feature>
<feature type="site" description="Cleavage; by host signal peptidase" evidence="3">
    <location>
        <begin position="383"/>
        <end position="384"/>
    </location>
</feature>
<feature type="site" description="Cleavage; by host signal peptidase" evidence="1">
    <location>
        <begin position="746"/>
        <end position="747"/>
    </location>
</feature>
<feature type="site" description="Cleavage; by host signal peptidase" evidence="1">
    <location>
        <begin position="809"/>
        <end position="810"/>
    </location>
</feature>
<feature type="site" description="Cleavage; by protease NS2-3" evidence="16">
    <location>
        <begin position="1026"/>
        <end position="1027"/>
    </location>
</feature>
<feature type="site" description="Cleavage; by serine protease/helicase NS3" evidence="6">
    <location>
        <begin position="1657"/>
        <end position="1658"/>
    </location>
</feature>
<feature type="site" description="Cleavage; by serine protease/helicase NS3" evidence="6">
    <location>
        <begin position="1711"/>
        <end position="1712"/>
    </location>
</feature>
<feature type="site" description="Cleavage; by serine protease/helicase NS3" evidence="6">
    <location>
        <begin position="1972"/>
        <end position="1973"/>
    </location>
</feature>
<feature type="site" description="Cleavage; by serine protease/helicase NS3" evidence="6">
    <location>
        <begin position="2419"/>
        <end position="2420"/>
    </location>
</feature>
<feature type="modified residue" description="N-acetylserine; by host" evidence="19">
    <location>
        <position position="2"/>
    </location>
</feature>
<feature type="modified residue" description="Phosphoserine; by host" evidence="8">
    <location>
        <position position="53"/>
    </location>
</feature>
<feature type="modified residue" description="Phosphoserine; by host" evidence="8">
    <location>
        <position position="99"/>
    </location>
</feature>
<feature type="modified residue" description="Phosphoserine; by host PKA" evidence="8">
    <location>
        <position position="116"/>
    </location>
</feature>
<feature type="modified residue" description="Phosphoserine; by host; in p56" evidence="12">
    <location>
        <position position="2194"/>
    </location>
</feature>
<feature type="modified residue" description="Phosphoserine; by host; in p58" evidence="12">
    <location>
        <position position="2197"/>
    </location>
</feature>
<feature type="modified residue" description="Phosphoserine; by host; in p58" evidence="12">
    <location>
        <position position="2201"/>
    </location>
</feature>
<feature type="modified residue" description="Phosphoserine; by host; in p58" evidence="12">
    <location>
        <position position="2204"/>
    </location>
</feature>
<feature type="modified residue" description="Phosphoserine; by host; in p58" evidence="11">
    <location>
        <position position="2207"/>
    </location>
</feature>
<feature type="modified residue" description="Phosphoserine; by host; in p58" evidence="11">
    <location>
        <position position="2210"/>
    </location>
</feature>
<feature type="modified residue" description="Phosphoserine; by host" evidence="3">
    <location>
        <position position="2448"/>
    </location>
</feature>
<feature type="modified residue" description="Phosphoserine; by host" evidence="3">
    <location>
        <position position="2461"/>
    </location>
</feature>
<feature type="lipid moiety-binding region" description="S-palmitoyl cysteine; by host" evidence="6">
    <location>
        <position position="922"/>
    </location>
</feature>
<feature type="lipid moiety-binding region" description="S-palmitoyl cysteine; by host" evidence="6">
    <location>
        <position position="1968"/>
    </location>
</feature>
<feature type="lipid moiety-binding region" description="S-palmitoyl cysteine; by host" evidence="6">
    <location>
        <position position="1972"/>
    </location>
</feature>
<feature type="glycosylation site" description="N-linked (GlcNAc...) asparagine; by host" evidence="6">
    <location>
        <position position="196"/>
    </location>
</feature>
<feature type="glycosylation site" description="N-linked (GlcNAc...) asparagine; by host" evidence="6">
    <location>
        <position position="209"/>
    </location>
</feature>
<feature type="glycosylation site" description="N-linked (GlcNAc...) asparagine; by host" evidence="6">
    <location>
        <position position="234"/>
    </location>
</feature>
<feature type="glycosylation site" description="N-linked (GlcNAc...) asparagine; by host" evidence="6">
    <location>
        <position position="250"/>
    </location>
</feature>
<feature type="glycosylation site" description="N-linked (GlcNAc...) asparagine; by host" evidence="13">
    <location>
        <position position="305"/>
    </location>
</feature>
<feature type="glycosylation site" description="N-linked (GlcNAc...) (high mannose) asparagine; by host" evidence="6">
    <location>
        <position position="417"/>
    </location>
</feature>
<feature type="glycosylation site" description="N-linked (GlcNAc...) (high mannose) asparagine; by host" evidence="6">
    <location>
        <position position="423"/>
    </location>
</feature>
<feature type="glycosylation site" description="N-linked (GlcNAc...) (high mannose) asparagine; by host" evidence="6">
    <location>
        <position position="430"/>
    </location>
</feature>
<feature type="glycosylation site" description="N-linked (GlcNAc...) (high mannose) asparagine; by host" evidence="6">
    <location>
        <position position="448"/>
    </location>
</feature>
<feature type="glycosylation site" description="N-linked (GlcNAc...) (high mannose) asparagine; by host" evidence="6">
    <location>
        <position position="532"/>
    </location>
</feature>
<feature type="glycosylation site" description="N-linked (GlcNAc...) asparagine; by host" evidence="13">
    <location>
        <position position="540"/>
    </location>
</feature>
<feature type="glycosylation site" description="N-linked (GlcNAc...) (high mannose) asparagine; by host" evidence="6">
    <location>
        <position position="556"/>
    </location>
</feature>
<feature type="glycosylation site" description="N-linked (GlcNAc...) (high mannose) asparagine; by host" evidence="6">
    <location>
        <position position="576"/>
    </location>
</feature>
<feature type="glycosylation site" description="N-linked (GlcNAc...) (high mannose) asparagine; by host" evidence="6">
    <location>
        <position position="623"/>
    </location>
</feature>
<feature type="glycosylation site" description="N-linked (GlcNAc...) (high mannose) asparagine; by host" evidence="6">
    <location>
        <position position="645"/>
    </location>
</feature>
<feature type="disulfide bond" evidence="6">
    <location>
        <begin position="429"/>
        <end position="552"/>
    </location>
</feature>
<feature type="disulfide bond" evidence="6">
    <location>
        <begin position="452"/>
        <end position="459"/>
    </location>
</feature>
<feature type="disulfide bond" evidence="6">
    <location>
        <begin position="486"/>
        <end position="494"/>
    </location>
</feature>
<feature type="disulfide bond" evidence="6">
    <location>
        <begin position="503"/>
        <end position="508"/>
    </location>
</feature>
<feature type="disulfide bond" evidence="6">
    <location>
        <begin position="564"/>
        <end position="569"/>
    </location>
</feature>
<feature type="disulfide bond" evidence="6">
    <location>
        <begin position="581"/>
        <end position="585"/>
    </location>
</feature>
<feature type="disulfide bond" evidence="6">
    <location>
        <begin position="597"/>
        <end position="620"/>
    </location>
</feature>
<feature type="disulfide bond" evidence="6">
    <location>
        <begin position="607"/>
        <end position="644"/>
    </location>
</feature>
<feature type="disulfide bond" evidence="6">
    <location>
        <begin position="652"/>
        <end position="677"/>
    </location>
</feature>
<feature type="cross-link" description="Glycyl lysine isopeptide (Lys-Gly) (interchain with G-Cter in ubiquitin)" evidence="6">
    <location>
        <position position="2350"/>
    </location>
</feature>
<organism>
    <name type="scientific">Hepatitis C virus genotype 1b (isolate HCR6)</name>
    <name type="common">HCV</name>
    <dbReference type="NCBI Taxonomy" id="421879"/>
    <lineage>
        <taxon>Viruses</taxon>
        <taxon>Riboviria</taxon>
        <taxon>Orthornavirae</taxon>
        <taxon>Kitrinoviricota</taxon>
        <taxon>Flasuviricetes</taxon>
        <taxon>Amarillovirales</taxon>
        <taxon>Flaviviridae</taxon>
        <taxon>Hepacivirus</taxon>
        <taxon>Hepacivirus hominis</taxon>
    </lineage>
</organism>
<sequence length="3010" mass="326942">MSTNPKPQRKTKRNTNRRPQDVKFPGGGQIVGGVYLLPRRGPRLGVRATRKTSERSQPRGRRQPIPKARQPEGRAWAQPGYPWPLYGNEGMGWAGWLLSPRGSRPSWGPTDPRRRSRNLGKVIDTLTCGFADLMGYIPLVGAPLGGVARALAHGVRVVEDGVNYATGNLPGCSFSIFLLALLSCLTIPASAYEVRNVSGIYHVTNDCSNSSIVYEAADMIMHTPGCVPCVREGNSSRCWVALTPTLAARNASVPTTAIRRHVDLLVGAAAFCSAMYVGDLCGSVFLVSQLFTFSPRRHETIQDCNCSIYPGHVSGHRMAWDMMMNWSPTTALVVSQLLRIPQAIVDMVAGAHWGVLAGLAYYSMVGNWAKVLIVMLLFAGVDGETRVTGGQIARNAYSLTTLFSSGSAQNIQLINTNGSWHINRTALNCNDSLNTGFLAALFYTHKFNASGCPERLASCRPIDKFDQGWGPITYAEQGGQDQRPYCWHYAPKPCGIVSASKVCGPVYCFTPSPVVVGTTDRFGVPTYSWGENETDVLLLNNTRPPQGNWFGCTWMNGTGFTKTCGGPPCNIGGGGNNTLTCPTDCFRKHPAATYTKCGSGPWLTPRCLVDYPYRLWHYPCTANFTIFKVRMYVGGVEHRLDAACNWTRGERCNLEDRDRLELSPLLLSTTEWQVLPCSFTTLPALSTGLIHLHQNIVDVQYLYGIGSAVVSFAIKWDYIVILFLLLADARVCACLWMMLLIAQAEAALENLVVLNAASVAGAHGILSFLVFFCAAWYIKGKLVPGAAYAFYGVWPLLLLLLALPPRAYAMEREMAASCGGAVFVGLVLLTLSPYYKEFLARLIWWLQYFITRAEAHLQVWIPPLNIRGGRDAIILLACVVHPELIFDITKLLLAILGPLMVLQASITQVPYFVRAQGLIRACMLVRKVAGGHYVQMAFVKLTALTGTYVYDHLTPLRDWAHAGLRDLAVAVEPVVFSDMETKVITWGADTAACGDIILGLPVSARRGREILLGPADSLEGQGWRLLAPITAYSQQTRGLLGCIITSLTGRDKNQVEGEVQVVSTATQSFLATCVNGACWTVFHGAGSKTLAGPKGPITQMYTNVDLDLVGWQAPPGSRSLTPCTCGSSDLYLVTRHADVIPVRRRGDSRGSLLSPRPVSYLKGSSGGPLLCPSRHAVGIFRAAVCTRGVAKAVDFIPVESMETTMRSPVFTDNSSPPAVPQTFQVAHLHAPTGSGKSTKVPAAYAAQGYKVLVLNPSVAATLGFGAYMSKAHGIDPNIRTGVRAITTGAPITYSTYGKFLADGGCSGGAYDIIICDECHSTDSTTILGIGTVLDQAETAGARLVVLATATPPGSVTVPHPNIEEVALSNAGEIPFYGKAIPIEVIKGGRHLIFCHSKKKYDELAAKLSALGLNAVAYYRGLDVSVIPTNGDVVVVATDALMTGFTGDFDSVIDCNTCVTQTVDFSLDPTFTIETTTVPQDAVARSQRRGRTGRGRRGIYRFVTPGERPSGMFDSSVLCECYDAGCAWYELTPAETSVRLRAYLNTPGLPVCQDHLEFWESVSTGLTHIDAHFLSQTKQAGDNFPYLVAYQATVCARAQAPPPSWDQMWKCLIRLKPTLHGPTPLLYRLGAVQNEITLTHPMTKFIMACMSADLEVVTSTWVLVGGVLAALAAYCLTTGSVVIVGRIILSGRPAVIPDREVLYREFDEMEECASHLPYIEQGMQLAEQFKQKALGLLQTATKQAEAAAPVVESKWRALETFWAKHMWNFISGIQYLAGLSTLPGNPAIASLMAFTASITSPLSTQNTLLFNIWGGWVAAQLAPPSAASAFVGAGIAGAAVGSIGLGKVLVDILAGYGAGVAGALVAFKIMSGEVPSTEDLVNLLPAILSPGALVVGVVCAAILRRHVGPGEGAVQWMNRLIAFASRGNHVSPAHYVPESDAAARVTQILSGLTITQLLKRLHHWINEDCSTPCSGSWLRDVWDWICTVLTDFKTWLQSKLLPRLPGVPFFSCQRGYKGVWRGDGIMQTTCPCGAQITGHVKNGSMRIVGPKTCSSTWHGTFPINAYTTGPCAPSPAPNYSRALWRVAAEEYVEVTRVGDFHYVTGMTTDNVKCPCQVPAPEFFTEVDGVRLHRYAPACKPLLREEVTFQVGLNQYLVGSQLPCEPEPDVAVLTSMLTDPSHITAETAKRRLARGSPPSLASSSASQLSAPSLKATCTTHHDSPDVDLIEANLLWRQEMGGNITRVESENKVVILDSFDPLRAEEDEREPSVAAEILRKTKRFPPAMPIWARPDYNPPLLESWKDPDYVPPVVHGCPLPPTKAPPIPPPRRKRTVVLTESTVSSALAELATKTFGSSGSSAVDSGTATAPPDQASDDGDQGSDVESYSSMPPLEGEPGDPDLSDGSWSTVSEEAGEDVICCSMSYTWTGALITPCAAEESKLPINPLSNSLLRHHNMVYATTSRSAGLRQKKVTFDRLQVLDDHYRDVLKEMKAKASTVKAKLLSIEEACKLTPPHSARSKFGYGAKDVRNLSSKAVNHIRSVWKDLLEDTETPIDTTVMAKSEVFCVQPEKGGRKPARLIVFPDLGVRVCEKMALYDVVSTLPQAVMGSSYGFQYSPGQRVEFLVNAWKSKKCPMGFSYDTRCFDSTVTESDIRVEESIYQCCDLAPEARQAIKSLTERLYIGGPLTNSKGQNCGYRRCRASGVLTTSCGNTLTCYLKASAACRAAKLRDCTMLVNGDDLVVICESAGTQEDEANLRVFTEAMTRYSAPPGDPPRPEYDLELITSCSSNVSVAHDASGKRVYYLTRDPSTPLARAAWETARHTPVNSWLGNIIMYAPTLWARMILMTHFFSILLAQEQLEKALDCQIYGACYSIEPLDLPQIIERLHGLSAFSLHSYSPGEINRVASCLRKLGVPPLRVWRHRARSVRAKLLSQGGRAATCGKYLFNWAVRTKLKLTPIPAASQLDLSSWFVAGYSGGDIYHSLSRARPRWFMLCLLLLSVGVGIYLLPNR</sequence>
<dbReference type="EC" id="3.4.22.-" evidence="4"/>
<dbReference type="EC" id="3.4.21.98" evidence="6"/>
<dbReference type="EC" id="3.6.1.15" evidence="6"/>
<dbReference type="EC" id="3.6.4.13" evidence="6"/>
<dbReference type="EC" id="2.7.7.48" evidence="6"/>
<dbReference type="EMBL" id="AY045702">
    <property type="protein sequence ID" value="AAK97744.1"/>
    <property type="molecule type" value="Genomic_RNA"/>
</dbReference>
<dbReference type="PIR" id="A61196">
    <property type="entry name" value="A61196"/>
</dbReference>
<dbReference type="PIR" id="PS0329">
    <property type="entry name" value="PS0329"/>
</dbReference>
<dbReference type="SMR" id="Q913V3"/>
<dbReference type="IntAct" id="Q913V3">
    <property type="interactions" value="3"/>
</dbReference>
<dbReference type="MEROPS" id="S29.001"/>
<dbReference type="iPTMnet" id="Q913V3"/>
<dbReference type="euHCVdb" id="AY045702"/>
<dbReference type="Proteomes" id="UP000008100">
    <property type="component" value="Genome"/>
</dbReference>
<dbReference type="GO" id="GO:0044167">
    <property type="term" value="C:host cell endoplasmic reticulum membrane"/>
    <property type="evidence" value="ECO:0007669"/>
    <property type="project" value="UniProtKB-SubCell"/>
</dbReference>
<dbReference type="GO" id="GO:0044186">
    <property type="term" value="C:host cell lipid droplet"/>
    <property type="evidence" value="ECO:0007669"/>
    <property type="project" value="UniProtKB-SubCell"/>
</dbReference>
<dbReference type="GO" id="GO:0044191">
    <property type="term" value="C:host cell mitochondrial membrane"/>
    <property type="evidence" value="ECO:0007669"/>
    <property type="project" value="UniProtKB-SubCell"/>
</dbReference>
<dbReference type="GO" id="GO:0042025">
    <property type="term" value="C:host cell nucleus"/>
    <property type="evidence" value="ECO:0007669"/>
    <property type="project" value="UniProtKB-SubCell"/>
</dbReference>
<dbReference type="GO" id="GO:0044220">
    <property type="term" value="C:host cell perinuclear region of cytoplasm"/>
    <property type="evidence" value="ECO:0007669"/>
    <property type="project" value="UniProtKB-SubCell"/>
</dbReference>
<dbReference type="GO" id="GO:0020002">
    <property type="term" value="C:host cell plasma membrane"/>
    <property type="evidence" value="ECO:0007669"/>
    <property type="project" value="UniProtKB-SubCell"/>
</dbReference>
<dbReference type="GO" id="GO:0016020">
    <property type="term" value="C:membrane"/>
    <property type="evidence" value="ECO:0007669"/>
    <property type="project" value="UniProtKB-KW"/>
</dbReference>
<dbReference type="GO" id="GO:1990904">
    <property type="term" value="C:ribonucleoprotein complex"/>
    <property type="evidence" value="ECO:0007669"/>
    <property type="project" value="UniProtKB-KW"/>
</dbReference>
<dbReference type="GO" id="GO:0019031">
    <property type="term" value="C:viral envelope"/>
    <property type="evidence" value="ECO:0007669"/>
    <property type="project" value="UniProtKB-KW"/>
</dbReference>
<dbReference type="GO" id="GO:0019013">
    <property type="term" value="C:viral nucleocapsid"/>
    <property type="evidence" value="ECO:0007669"/>
    <property type="project" value="UniProtKB-KW"/>
</dbReference>
<dbReference type="GO" id="GO:0055036">
    <property type="term" value="C:virion membrane"/>
    <property type="evidence" value="ECO:0007669"/>
    <property type="project" value="UniProtKB-SubCell"/>
</dbReference>
<dbReference type="GO" id="GO:0005524">
    <property type="term" value="F:ATP binding"/>
    <property type="evidence" value="ECO:0007669"/>
    <property type="project" value="UniProtKB-KW"/>
</dbReference>
<dbReference type="GO" id="GO:0016887">
    <property type="term" value="F:ATP hydrolysis activity"/>
    <property type="evidence" value="ECO:0007669"/>
    <property type="project" value="RHEA"/>
</dbReference>
<dbReference type="GO" id="GO:0015267">
    <property type="term" value="F:channel activity"/>
    <property type="evidence" value="ECO:0007669"/>
    <property type="project" value="UniProtKB-KW"/>
</dbReference>
<dbReference type="GO" id="GO:0004197">
    <property type="term" value="F:cysteine-type endopeptidase activity"/>
    <property type="evidence" value="ECO:0007669"/>
    <property type="project" value="InterPro"/>
</dbReference>
<dbReference type="GO" id="GO:0003723">
    <property type="term" value="F:RNA binding"/>
    <property type="evidence" value="ECO:0007669"/>
    <property type="project" value="UniProtKB-KW"/>
</dbReference>
<dbReference type="GO" id="GO:0003724">
    <property type="term" value="F:RNA helicase activity"/>
    <property type="evidence" value="ECO:0007669"/>
    <property type="project" value="UniProtKB-EC"/>
</dbReference>
<dbReference type="GO" id="GO:0003968">
    <property type="term" value="F:RNA-directed RNA polymerase activity"/>
    <property type="evidence" value="ECO:0007669"/>
    <property type="project" value="UniProtKB-KW"/>
</dbReference>
<dbReference type="GO" id="GO:0004252">
    <property type="term" value="F:serine-type endopeptidase activity"/>
    <property type="evidence" value="ECO:0007669"/>
    <property type="project" value="InterPro"/>
</dbReference>
<dbReference type="GO" id="GO:0017124">
    <property type="term" value="F:SH3 domain binding"/>
    <property type="evidence" value="ECO:0007669"/>
    <property type="project" value="UniProtKB-KW"/>
</dbReference>
<dbReference type="GO" id="GO:0005198">
    <property type="term" value="F:structural molecule activity"/>
    <property type="evidence" value="ECO:0007669"/>
    <property type="project" value="InterPro"/>
</dbReference>
<dbReference type="GO" id="GO:0008270">
    <property type="term" value="F:zinc ion binding"/>
    <property type="evidence" value="ECO:0007669"/>
    <property type="project" value="InterPro"/>
</dbReference>
<dbReference type="GO" id="GO:0075512">
    <property type="term" value="P:clathrin-dependent endocytosis of virus by host cell"/>
    <property type="evidence" value="ECO:0007669"/>
    <property type="project" value="UniProtKB-KW"/>
</dbReference>
<dbReference type="GO" id="GO:0039654">
    <property type="term" value="P:fusion of virus membrane with host endosome membrane"/>
    <property type="evidence" value="ECO:0007669"/>
    <property type="project" value="UniProtKB-KW"/>
</dbReference>
<dbReference type="GO" id="GO:0034220">
    <property type="term" value="P:monoatomic ion transmembrane transport"/>
    <property type="evidence" value="ECO:0007669"/>
    <property type="project" value="UniProtKB-KW"/>
</dbReference>
<dbReference type="GO" id="GO:0006508">
    <property type="term" value="P:proteolysis"/>
    <property type="evidence" value="ECO:0007669"/>
    <property type="project" value="UniProtKB-KW"/>
</dbReference>
<dbReference type="GO" id="GO:0039520">
    <property type="term" value="P:symbiont-mediated activation of host autophagy"/>
    <property type="evidence" value="ECO:0007669"/>
    <property type="project" value="UniProtKB-KW"/>
</dbReference>
<dbReference type="GO" id="GO:0039645">
    <property type="term" value="P:symbiont-mediated perturbation of host cell cycle G1/S transition checkpoint"/>
    <property type="evidence" value="ECO:0007669"/>
    <property type="project" value="UniProtKB-KW"/>
</dbReference>
<dbReference type="GO" id="GO:0039545">
    <property type="term" value="P:symbiont-mediated suppression of host cytoplasmic pattern recognition receptor signaling pathway via inhibition of MAVS activity"/>
    <property type="evidence" value="ECO:0007669"/>
    <property type="project" value="UniProtKB-KW"/>
</dbReference>
<dbReference type="GO" id="GO:0039563">
    <property type="term" value="P:symbiont-mediated suppression of host JAK-STAT cascade via inhibition of STAT1 activity"/>
    <property type="evidence" value="ECO:0007669"/>
    <property type="project" value="UniProtKB-KW"/>
</dbReference>
<dbReference type="GO" id="GO:0039527">
    <property type="term" value="P:symbiont-mediated suppression of host TRAF-mediated signal transduction"/>
    <property type="evidence" value="ECO:0007669"/>
    <property type="project" value="UniProtKB-KW"/>
</dbReference>
<dbReference type="GO" id="GO:0039502">
    <property type="term" value="P:symbiont-mediated suppression of host type I interferon-mediated signaling pathway"/>
    <property type="evidence" value="ECO:0007669"/>
    <property type="project" value="UniProtKB-KW"/>
</dbReference>
<dbReference type="GO" id="GO:0019087">
    <property type="term" value="P:symbiont-mediated transformation of host cell"/>
    <property type="evidence" value="ECO:0007669"/>
    <property type="project" value="InterPro"/>
</dbReference>
<dbReference type="GO" id="GO:0039694">
    <property type="term" value="P:viral RNA genome replication"/>
    <property type="evidence" value="ECO:0007669"/>
    <property type="project" value="InterPro"/>
</dbReference>
<dbReference type="GO" id="GO:0019062">
    <property type="term" value="P:virion attachment to host cell"/>
    <property type="evidence" value="ECO:0007669"/>
    <property type="project" value="UniProtKB-KW"/>
</dbReference>
<dbReference type="CDD" id="cd17931">
    <property type="entry name" value="DEXHc_viral_Ns3"/>
    <property type="match status" value="1"/>
</dbReference>
<dbReference type="CDD" id="cd20903">
    <property type="entry name" value="HCV_p7"/>
    <property type="match status" value="1"/>
</dbReference>
<dbReference type="CDD" id="cd23202">
    <property type="entry name" value="Hepacivirus_RdRp"/>
    <property type="match status" value="1"/>
</dbReference>
<dbReference type="FunFam" id="1.10.820.10:FF:000001">
    <property type="entry name" value="Genome polyprotein"/>
    <property type="match status" value="1"/>
</dbReference>
<dbReference type="FunFam" id="1.20.1280.150:FF:000001">
    <property type="entry name" value="Genome polyprotein"/>
    <property type="match status" value="1"/>
</dbReference>
<dbReference type="FunFam" id="2.20.25.210:FF:000001">
    <property type="entry name" value="Genome polyprotein"/>
    <property type="match status" value="1"/>
</dbReference>
<dbReference type="FunFam" id="2.20.25.220:FF:000001">
    <property type="entry name" value="Genome polyprotein"/>
    <property type="match status" value="1"/>
</dbReference>
<dbReference type="FunFam" id="2.40.10.10:FF:000029">
    <property type="entry name" value="Genome polyprotein"/>
    <property type="match status" value="1"/>
</dbReference>
<dbReference type="FunFam" id="2.40.10.120:FF:000003">
    <property type="entry name" value="Genome polyprotein"/>
    <property type="match status" value="1"/>
</dbReference>
<dbReference type="FunFam" id="3.30.160.890:FF:000001">
    <property type="entry name" value="Genome polyprotein"/>
    <property type="match status" value="1"/>
</dbReference>
<dbReference type="FunFam" id="3.30.70.270:FF:000015">
    <property type="entry name" value="Genome polyprotein"/>
    <property type="match status" value="1"/>
</dbReference>
<dbReference type="FunFam" id="3.40.50.300:FF:000557">
    <property type="entry name" value="Genome polyprotein"/>
    <property type="match status" value="1"/>
</dbReference>
<dbReference type="FunFam" id="3.40.50.300:FF:000717">
    <property type="entry name" value="Genome polyprotein"/>
    <property type="match status" value="1"/>
</dbReference>
<dbReference type="FunFam" id="4.10.710.10:FF:000001">
    <property type="entry name" value="Genome polyprotein"/>
    <property type="match status" value="1"/>
</dbReference>
<dbReference type="Gene3D" id="2.40.10.120">
    <property type="match status" value="1"/>
</dbReference>
<dbReference type="Gene3D" id="3.30.70.270">
    <property type="match status" value="2"/>
</dbReference>
<dbReference type="Gene3D" id="6.10.250.1610">
    <property type="match status" value="1"/>
</dbReference>
<dbReference type="Gene3D" id="6.10.250.1750">
    <property type="match status" value="1"/>
</dbReference>
<dbReference type="Gene3D" id="6.10.250.2920">
    <property type="match status" value="1"/>
</dbReference>
<dbReference type="Gene3D" id="2.20.25.210">
    <property type="entry name" value="Hepatitis C NS5A, domain 1B"/>
    <property type="match status" value="1"/>
</dbReference>
<dbReference type="Gene3D" id="4.10.710.10">
    <property type="entry name" value="Hepatitis C Virus Capsid Protein, Chain A"/>
    <property type="match status" value="1"/>
</dbReference>
<dbReference type="Gene3D" id="3.30.160.890">
    <property type="entry name" value="Hepatitis C virus envelope glycoprotein E1, chain C"/>
    <property type="match status" value="1"/>
</dbReference>
<dbReference type="Gene3D" id="2.30.30.710">
    <property type="entry name" value="Hepatitis C virus non-structural protein NS2, C-terminal domain"/>
    <property type="match status" value="1"/>
</dbReference>
<dbReference type="Gene3D" id="1.20.1280.150">
    <property type="entry name" value="Hepatitis C virus non-structural protein NS2, N-terminal domain"/>
    <property type="match status" value="1"/>
</dbReference>
<dbReference type="Gene3D" id="2.20.25.220">
    <property type="entry name" value="Hepatitis C virus NS5A, 1B domain"/>
    <property type="match status" value="1"/>
</dbReference>
<dbReference type="Gene3D" id="3.40.50.300">
    <property type="entry name" value="P-loop containing nucleotide triphosphate hydrolases"/>
    <property type="match status" value="2"/>
</dbReference>
<dbReference type="Gene3D" id="1.10.820.10">
    <property type="entry name" value="RNA Helicase Chain A , domain 3"/>
    <property type="match status" value="1"/>
</dbReference>
<dbReference type="Gene3D" id="2.40.10.10">
    <property type="entry name" value="Trypsin-like serine proteases"/>
    <property type="match status" value="1"/>
</dbReference>
<dbReference type="InterPro" id="IPR043502">
    <property type="entry name" value="DNA/RNA_pol_sf"/>
</dbReference>
<dbReference type="InterPro" id="IPR011492">
    <property type="entry name" value="Flavi_DEAD"/>
</dbReference>
<dbReference type="InterPro" id="IPR002521">
    <property type="entry name" value="HCV_Core_C"/>
</dbReference>
<dbReference type="InterPro" id="IPR044896">
    <property type="entry name" value="HCV_core_chain_A"/>
</dbReference>
<dbReference type="InterPro" id="IPR002522">
    <property type="entry name" value="HCV_core_N"/>
</dbReference>
<dbReference type="InterPro" id="IPR002519">
    <property type="entry name" value="HCV_Env"/>
</dbReference>
<dbReference type="InterPro" id="IPR002531">
    <property type="entry name" value="HCV_NS1"/>
</dbReference>
<dbReference type="InterPro" id="IPR002518">
    <property type="entry name" value="HCV_NS2"/>
</dbReference>
<dbReference type="InterPro" id="IPR042205">
    <property type="entry name" value="HCV_NS2_C"/>
</dbReference>
<dbReference type="InterPro" id="IPR042209">
    <property type="entry name" value="HCV_NS2_N"/>
</dbReference>
<dbReference type="InterPro" id="IPR000745">
    <property type="entry name" value="HCV_NS4a"/>
</dbReference>
<dbReference type="InterPro" id="IPR001490">
    <property type="entry name" value="HCV_NS4b"/>
</dbReference>
<dbReference type="InterPro" id="IPR002868">
    <property type="entry name" value="HCV_NS5a"/>
</dbReference>
<dbReference type="InterPro" id="IPR013192">
    <property type="entry name" value="HCV_NS5A_1a"/>
</dbReference>
<dbReference type="InterPro" id="IPR013193">
    <property type="entry name" value="HCV_NS5a_1B_dom"/>
</dbReference>
<dbReference type="InterPro" id="IPR038568">
    <property type="entry name" value="HCV_NS5A_1B_sf"/>
</dbReference>
<dbReference type="InterPro" id="IPR024350">
    <property type="entry name" value="HCV_NS5a_C"/>
</dbReference>
<dbReference type="InterPro" id="IPR049913">
    <property type="entry name" value="HCV_p7"/>
</dbReference>
<dbReference type="InterPro" id="IPR014001">
    <property type="entry name" value="Helicase_ATP-bd"/>
</dbReference>
<dbReference type="InterPro" id="IPR001650">
    <property type="entry name" value="Helicase_C-like"/>
</dbReference>
<dbReference type="InterPro" id="IPR004109">
    <property type="entry name" value="HepC_NS3_protease"/>
</dbReference>
<dbReference type="InterPro" id="IPR054175">
    <property type="entry name" value="NS3_helicase_C"/>
</dbReference>
<dbReference type="InterPro" id="IPR038170">
    <property type="entry name" value="NS5A_1a_sf"/>
</dbReference>
<dbReference type="InterPro" id="IPR027417">
    <property type="entry name" value="P-loop_NTPase"/>
</dbReference>
<dbReference type="InterPro" id="IPR009003">
    <property type="entry name" value="Peptidase_S1_PA"/>
</dbReference>
<dbReference type="InterPro" id="IPR043504">
    <property type="entry name" value="Peptidase_S1_PA_chymotrypsin"/>
</dbReference>
<dbReference type="InterPro" id="IPR043128">
    <property type="entry name" value="Rev_trsase/Diguanyl_cyclase"/>
</dbReference>
<dbReference type="InterPro" id="IPR007094">
    <property type="entry name" value="RNA-dir_pol_PSvirus"/>
</dbReference>
<dbReference type="InterPro" id="IPR002166">
    <property type="entry name" value="RNA_pol_HCV"/>
</dbReference>
<dbReference type="Pfam" id="PF07652">
    <property type="entry name" value="Flavi_DEAD"/>
    <property type="match status" value="1"/>
</dbReference>
<dbReference type="Pfam" id="PF01543">
    <property type="entry name" value="HCV_capsid"/>
    <property type="match status" value="1"/>
</dbReference>
<dbReference type="Pfam" id="PF01542">
    <property type="entry name" value="HCV_core"/>
    <property type="match status" value="1"/>
</dbReference>
<dbReference type="Pfam" id="PF01539">
    <property type="entry name" value="HCV_env"/>
    <property type="match status" value="1"/>
</dbReference>
<dbReference type="Pfam" id="PF01560">
    <property type="entry name" value="HCV_NS1"/>
    <property type="match status" value="1"/>
</dbReference>
<dbReference type="Pfam" id="PF01538">
    <property type="entry name" value="HCV_NS2"/>
    <property type="match status" value="1"/>
</dbReference>
<dbReference type="Pfam" id="PF01006">
    <property type="entry name" value="HCV_NS4a"/>
    <property type="match status" value="1"/>
</dbReference>
<dbReference type="Pfam" id="PF01001">
    <property type="entry name" value="HCV_NS4b"/>
    <property type="match status" value="1"/>
</dbReference>
<dbReference type="Pfam" id="PF01506">
    <property type="entry name" value="HCV_NS5a"/>
    <property type="match status" value="1"/>
</dbReference>
<dbReference type="Pfam" id="PF08300">
    <property type="entry name" value="HCV_NS5a_1a"/>
    <property type="match status" value="1"/>
</dbReference>
<dbReference type="Pfam" id="PF08301">
    <property type="entry name" value="HCV_NS5a_1b"/>
    <property type="match status" value="1"/>
</dbReference>
<dbReference type="Pfam" id="PF12941">
    <property type="entry name" value="HCV_NS5a_C"/>
    <property type="match status" value="1"/>
</dbReference>
<dbReference type="Pfam" id="PF22027">
    <property type="entry name" value="NS3_helicase_C"/>
    <property type="match status" value="1"/>
</dbReference>
<dbReference type="Pfam" id="PF02907">
    <property type="entry name" value="Peptidase_S29"/>
    <property type="match status" value="1"/>
</dbReference>
<dbReference type="Pfam" id="PF00998">
    <property type="entry name" value="RdRP_3"/>
    <property type="match status" value="1"/>
</dbReference>
<dbReference type="SMART" id="SM00487">
    <property type="entry name" value="DEXDc"/>
    <property type="match status" value="1"/>
</dbReference>
<dbReference type="SMART" id="SM00490">
    <property type="entry name" value="HELICc"/>
    <property type="match status" value="1"/>
</dbReference>
<dbReference type="SUPFAM" id="SSF56672">
    <property type="entry name" value="DNA/RNA polymerases"/>
    <property type="match status" value="1"/>
</dbReference>
<dbReference type="SUPFAM" id="SSF52540">
    <property type="entry name" value="P-loop containing nucleoside triphosphate hydrolases"/>
    <property type="match status" value="2"/>
</dbReference>
<dbReference type="SUPFAM" id="SSF50494">
    <property type="entry name" value="Trypsin-like serine proteases"/>
    <property type="match status" value="1"/>
</dbReference>
<dbReference type="PROSITE" id="PS51693">
    <property type="entry name" value="HCV_NS2_PRO"/>
    <property type="match status" value="1"/>
</dbReference>
<dbReference type="PROSITE" id="PS51192">
    <property type="entry name" value="HELICASE_ATP_BIND_1"/>
    <property type="match status" value="1"/>
</dbReference>
<dbReference type="PROSITE" id="PS51194">
    <property type="entry name" value="HELICASE_CTER"/>
    <property type="match status" value="1"/>
</dbReference>
<dbReference type="PROSITE" id="PS51822">
    <property type="entry name" value="HV_PV_NS3_PRO"/>
    <property type="match status" value="1"/>
</dbReference>
<dbReference type="PROSITE" id="PS50507">
    <property type="entry name" value="RDRP_SSRNA_POS"/>
    <property type="match status" value="1"/>
</dbReference>
<reference key="1">
    <citation type="journal article" date="2004" name="J. Biol. Chem.">
        <title>Activation of the CKI-CDK-Rb-E2F pathway in full genome hepatitis C virus-expressing cells.</title>
        <authorList>
            <person name="Tsukiyama-Kohara K."/>
            <person name="Tone S."/>
            <person name="Maruyama I."/>
            <person name="Inoue K."/>
            <person name="Katsume A."/>
            <person name="Nuriya H."/>
            <person name="Ohmori H."/>
            <person name="Ohkawa J."/>
            <person name="Taira K."/>
            <person name="Hoshikawa Y."/>
            <person name="Shibasaki F."/>
            <person name="Reth M."/>
            <person name="Minatogawa Y."/>
            <person name="Kohara M."/>
        </authorList>
    </citation>
    <scope>NUCLEOTIDE SEQUENCE [GENOMIC RNA]</scope>
</reference>
<reference key="2">
    <citation type="journal article" date="2004" name="J. Virol.">
        <title>Membrane binding properties and terminal residues of the mature hepatitis C virus capsid protein in insect cells.</title>
        <authorList>
            <person name="Ogino T."/>
            <person name="Fukuda H."/>
            <person name="Imajoh-Ohmi S."/>
            <person name="Kohara M."/>
            <person name="Nomoto A."/>
        </authorList>
    </citation>
    <scope>ACETYLATION AT SER-2</scope>
    <scope>IDENTIFICATION BY MASS SPECTROMETRY</scope>
    <scope>PROTEOLYTIC CLEAVAGE (GENOME POLYPROTEIN)</scope>
</reference>
<protein>
    <recommendedName>
        <fullName>Genome polyprotein</fullName>
    </recommendedName>
    <component>
        <recommendedName>
            <fullName>Core protein precursor</fullName>
        </recommendedName>
        <alternativeName>
            <fullName>Capsid protein C</fullName>
        </alternativeName>
        <alternativeName>
            <fullName>p23</fullName>
        </alternativeName>
    </component>
    <component>
        <recommendedName>
            <fullName>Mature core protein</fullName>
        </recommendedName>
        <alternativeName>
            <fullName>p21</fullName>
        </alternativeName>
    </component>
    <component>
        <recommendedName>
            <fullName>Envelope glycoprotein E1</fullName>
        </recommendedName>
        <alternativeName>
            <fullName>gp32</fullName>
        </alternativeName>
        <alternativeName>
            <fullName>gp35</fullName>
        </alternativeName>
    </component>
    <component>
        <recommendedName>
            <fullName>Envelope glycoprotein E2</fullName>
        </recommendedName>
        <alternativeName>
            <fullName>NS1</fullName>
        </alternativeName>
        <alternativeName>
            <fullName>gp68</fullName>
        </alternativeName>
        <alternativeName>
            <fullName>gp70</fullName>
        </alternativeName>
    </component>
    <component>
        <recommendedName>
            <fullName>Viroporin p7</fullName>
        </recommendedName>
    </component>
    <component>
        <recommendedName>
            <fullName>Protease NS2</fullName>
            <shortName>p23</shortName>
            <ecNumber evidence="4">3.4.22.-</ecNumber>
        </recommendedName>
        <alternativeName>
            <fullName>Non-structural protein 2</fullName>
            <shortName>NS2</shortName>
        </alternativeName>
    </component>
    <component>
        <recommendedName>
            <fullName>Serine protease/helicase NS3</fullName>
            <ecNumber evidence="6">3.4.21.98</ecNumber>
            <ecNumber evidence="6">3.6.1.15</ecNumber>
            <ecNumber evidence="6">3.6.4.13</ecNumber>
        </recommendedName>
        <alternativeName>
            <fullName>Hepacivirin</fullName>
        </alternativeName>
        <alternativeName>
            <fullName evidence="6">NS3 helicase</fullName>
        </alternativeName>
        <alternativeName>
            <fullName evidence="6">NS3 protease</fullName>
        </alternativeName>
        <alternativeName>
            <fullName>NS3P</fullName>
        </alternativeName>
        <alternativeName>
            <fullName>Viroporin p70</fullName>
        </alternativeName>
    </component>
    <component>
        <recommendedName>
            <fullName>Non-structural protein 4A</fullName>
            <shortName>NS4A</shortName>
        </recommendedName>
        <alternativeName>
            <fullName>p8</fullName>
        </alternativeName>
    </component>
    <component>
        <recommendedName>
            <fullName>Non-structural protein 4B</fullName>
            <shortName>NS4B</shortName>
        </recommendedName>
        <alternativeName>
            <fullName>p27</fullName>
        </alternativeName>
    </component>
    <component>
        <recommendedName>
            <fullName>Non-structural protein 5A</fullName>
            <shortName>NS5A</shortName>
        </recommendedName>
        <alternativeName>
            <fullName>p56/58</fullName>
        </alternativeName>
    </component>
    <component>
        <recommendedName>
            <fullName>RNA-directed RNA polymerase</fullName>
            <ecNumber evidence="6">2.7.7.48</ecNumber>
        </recommendedName>
        <alternativeName>
            <fullName>NS5B</fullName>
        </alternativeName>
        <alternativeName>
            <fullName>p68</fullName>
        </alternativeName>
    </component>
</protein>
<keyword id="KW-0007">Acetylation</keyword>
<keyword id="KW-1072">Activation of host autophagy by virus</keyword>
<keyword id="KW-0053">Apoptosis</keyword>
<keyword id="KW-0067">ATP-binding</keyword>
<keyword id="KW-0167">Capsid protein</keyword>
<keyword id="KW-1165">Clathrin-mediated endocytosis of virus by host</keyword>
<keyword id="KW-1015">Disulfide bond</keyword>
<keyword id="KW-1170">Fusion of virus membrane with host endosomal membrane</keyword>
<keyword id="KW-1168">Fusion of virus membrane with host membrane</keyword>
<keyword id="KW-1078">G1/S host cell cycle checkpoint dysregulation by virus</keyword>
<keyword id="KW-0325">Glycoprotein</keyword>
<keyword id="KW-0347">Helicase</keyword>
<keyword id="KW-1032">Host cell membrane</keyword>
<keyword id="KW-1035">Host cytoplasm</keyword>
<keyword id="KW-1038">Host endoplasmic reticulum</keyword>
<keyword id="KW-1041">Host lipid droplet</keyword>
<keyword id="KW-1043">Host membrane</keyword>
<keyword id="KW-1045">Host mitochondrion</keyword>
<keyword id="KW-1048">Host nucleus</keyword>
<keyword id="KW-0945">Host-virus interaction</keyword>
<keyword id="KW-0378">Hydrolase</keyword>
<keyword id="KW-1090">Inhibition of host innate immune response by virus</keyword>
<keyword id="KW-1114">Inhibition of host interferon signaling pathway by virus</keyword>
<keyword id="KW-1097">Inhibition of host MAVS by virus</keyword>
<keyword id="KW-1113">Inhibition of host RLR pathway by virus</keyword>
<keyword id="KW-1105">Inhibition of host STAT1 by virus</keyword>
<keyword id="KW-1110">Inhibition of host TRAFs by virus</keyword>
<keyword id="KW-0922">Interferon antiviral system evasion</keyword>
<keyword id="KW-0407">Ion channel</keyword>
<keyword id="KW-0406">Ion transport</keyword>
<keyword id="KW-1017">Isopeptide bond</keyword>
<keyword id="KW-0449">Lipoprotein</keyword>
<keyword id="KW-0460">Magnesium</keyword>
<keyword id="KW-0472">Membrane</keyword>
<keyword id="KW-0479">Metal-binding</keyword>
<keyword id="KW-1121">Modulation of host cell cycle by virus</keyword>
<keyword id="KW-0511">Multifunctional enzyme</keyword>
<keyword id="KW-0547">Nucleotide-binding</keyword>
<keyword id="KW-0548">Nucleotidyltransferase</keyword>
<keyword id="KW-0553">Oncogene</keyword>
<keyword id="KW-0564">Palmitate</keyword>
<keyword id="KW-0597">Phosphoprotein</keyword>
<keyword id="KW-0645">Protease</keyword>
<keyword id="KW-0687">Ribonucleoprotein</keyword>
<keyword id="KW-0694">RNA-binding</keyword>
<keyword id="KW-0696">RNA-directed RNA polymerase</keyword>
<keyword id="KW-0720">Serine protease</keyword>
<keyword id="KW-0729">SH3-binding</keyword>
<keyword id="KW-0788">Thiol protease</keyword>
<keyword id="KW-0804">Transcription</keyword>
<keyword id="KW-0805">Transcription regulation</keyword>
<keyword id="KW-0808">Transferase</keyword>
<keyword id="KW-0812">Transmembrane</keyword>
<keyword id="KW-1133">Transmembrane helix</keyword>
<keyword id="KW-0813">Transport</keyword>
<keyword id="KW-0832">Ubl conjugation</keyword>
<keyword id="KW-1161">Viral attachment to host cell</keyword>
<keyword id="KW-0261">Viral envelope protein</keyword>
<keyword id="KW-0899">Viral immunoevasion</keyword>
<keyword id="KW-1182">Viral ion channel</keyword>
<keyword id="KW-0543">Viral nucleoprotein</keyword>
<keyword id="KW-1162">Viral penetration into host cytoplasm</keyword>
<keyword id="KW-0693">Viral RNA replication</keyword>
<keyword id="KW-0946">Virion</keyword>
<keyword id="KW-1164">Virus endocytosis by host</keyword>
<keyword id="KW-1160">Virus entry into host cell</keyword>
<keyword id="KW-0862">Zinc</keyword>